<accession>P13864</accession>
<accession>P97413</accession>
<accession>Q80ZU3</accession>
<accession>Q9CSC6</accession>
<accession>Q9QXX6</accession>
<organism>
    <name type="scientific">Mus musculus</name>
    <name type="common">Mouse</name>
    <dbReference type="NCBI Taxonomy" id="10090"/>
    <lineage>
        <taxon>Eukaryota</taxon>
        <taxon>Metazoa</taxon>
        <taxon>Chordata</taxon>
        <taxon>Craniata</taxon>
        <taxon>Vertebrata</taxon>
        <taxon>Euteleostomi</taxon>
        <taxon>Mammalia</taxon>
        <taxon>Eutheria</taxon>
        <taxon>Euarchontoglires</taxon>
        <taxon>Glires</taxon>
        <taxon>Rodentia</taxon>
        <taxon>Myomorpha</taxon>
        <taxon>Muroidea</taxon>
        <taxon>Muridae</taxon>
        <taxon>Murinae</taxon>
        <taxon>Mus</taxon>
        <taxon>Mus</taxon>
    </lineage>
</organism>
<dbReference type="EC" id="2.1.1.37"/>
<dbReference type="EMBL" id="X14805">
    <property type="protein sequence ID" value="CAA32910.1"/>
    <property type="molecule type" value="mRNA"/>
</dbReference>
<dbReference type="EMBL" id="AF175432">
    <property type="protein sequence ID" value="AAF97695.1"/>
    <property type="molecule type" value="mRNA"/>
</dbReference>
<dbReference type="EMBL" id="AF162282">
    <property type="protein sequence ID" value="AAF19352.1"/>
    <property type="molecule type" value="mRNA"/>
</dbReference>
<dbReference type="EMBL" id="AF175431">
    <property type="protein sequence ID" value="AAF60965.1"/>
    <property type="molecule type" value="Genomic_DNA"/>
</dbReference>
<dbReference type="EMBL" id="AF175412">
    <property type="protein sequence ID" value="AAF60965.1"/>
    <property type="status" value="JOINED"/>
    <property type="molecule type" value="Genomic_DNA"/>
</dbReference>
<dbReference type="EMBL" id="AF175413">
    <property type="protein sequence ID" value="AAF60965.1"/>
    <property type="status" value="JOINED"/>
    <property type="molecule type" value="Genomic_DNA"/>
</dbReference>
<dbReference type="EMBL" id="AF175414">
    <property type="protein sequence ID" value="AAF60965.1"/>
    <property type="status" value="JOINED"/>
    <property type="molecule type" value="Genomic_DNA"/>
</dbReference>
<dbReference type="EMBL" id="AF244089">
    <property type="protein sequence ID" value="AAF60965.1"/>
    <property type="status" value="JOINED"/>
    <property type="molecule type" value="Genomic_DNA"/>
</dbReference>
<dbReference type="EMBL" id="AF244090">
    <property type="protein sequence ID" value="AAF60965.1"/>
    <property type="status" value="JOINED"/>
    <property type="molecule type" value="Genomic_DNA"/>
</dbReference>
<dbReference type="EMBL" id="AF175416">
    <property type="protein sequence ID" value="AAF60965.1"/>
    <property type="status" value="JOINED"/>
    <property type="molecule type" value="Genomic_DNA"/>
</dbReference>
<dbReference type="EMBL" id="AF175417">
    <property type="protein sequence ID" value="AAF60965.1"/>
    <property type="status" value="JOINED"/>
    <property type="molecule type" value="Genomic_DNA"/>
</dbReference>
<dbReference type="EMBL" id="AF175418">
    <property type="protein sequence ID" value="AAF60965.1"/>
    <property type="status" value="JOINED"/>
    <property type="molecule type" value="Genomic_DNA"/>
</dbReference>
<dbReference type="EMBL" id="AF175419">
    <property type="protein sequence ID" value="AAF60965.1"/>
    <property type="status" value="JOINED"/>
    <property type="molecule type" value="Genomic_DNA"/>
</dbReference>
<dbReference type="EMBL" id="AF175420">
    <property type="protein sequence ID" value="AAF60965.1"/>
    <property type="status" value="JOINED"/>
    <property type="molecule type" value="Genomic_DNA"/>
</dbReference>
<dbReference type="EMBL" id="AF175421">
    <property type="protein sequence ID" value="AAF60965.1"/>
    <property type="status" value="JOINED"/>
    <property type="molecule type" value="Genomic_DNA"/>
</dbReference>
<dbReference type="EMBL" id="AF175422">
    <property type="protein sequence ID" value="AAF60965.1"/>
    <property type="status" value="JOINED"/>
    <property type="molecule type" value="Genomic_DNA"/>
</dbReference>
<dbReference type="EMBL" id="AF175423">
    <property type="protein sequence ID" value="AAF60965.1"/>
    <property type="status" value="JOINED"/>
    <property type="molecule type" value="Genomic_DNA"/>
</dbReference>
<dbReference type="EMBL" id="AF234317">
    <property type="protein sequence ID" value="AAF60965.1"/>
    <property type="status" value="JOINED"/>
    <property type="molecule type" value="Genomic_DNA"/>
</dbReference>
<dbReference type="EMBL" id="AF175424">
    <property type="protein sequence ID" value="AAF60965.1"/>
    <property type="status" value="JOINED"/>
    <property type="molecule type" value="Genomic_DNA"/>
</dbReference>
<dbReference type="EMBL" id="AF175425">
    <property type="protein sequence ID" value="AAF60965.1"/>
    <property type="status" value="JOINED"/>
    <property type="molecule type" value="Genomic_DNA"/>
</dbReference>
<dbReference type="EMBL" id="AF175426">
    <property type="protein sequence ID" value="AAF60965.1"/>
    <property type="status" value="JOINED"/>
    <property type="molecule type" value="Genomic_DNA"/>
</dbReference>
<dbReference type="EMBL" id="AF234318">
    <property type="protein sequence ID" value="AAF60965.1"/>
    <property type="status" value="JOINED"/>
    <property type="molecule type" value="Genomic_DNA"/>
</dbReference>
<dbReference type="EMBL" id="AF175427">
    <property type="protein sequence ID" value="AAF60965.1"/>
    <property type="status" value="JOINED"/>
    <property type="molecule type" value="Genomic_DNA"/>
</dbReference>
<dbReference type="EMBL" id="AF175428">
    <property type="protein sequence ID" value="AAF60965.1"/>
    <property type="status" value="JOINED"/>
    <property type="molecule type" value="Genomic_DNA"/>
</dbReference>
<dbReference type="EMBL" id="AF175429">
    <property type="protein sequence ID" value="AAF60965.1"/>
    <property type="status" value="JOINED"/>
    <property type="molecule type" value="Genomic_DNA"/>
</dbReference>
<dbReference type="EMBL" id="AF175430">
    <property type="protein sequence ID" value="AAF60965.1"/>
    <property type="status" value="JOINED"/>
    <property type="molecule type" value="Genomic_DNA"/>
</dbReference>
<dbReference type="EMBL" id="BC048148">
    <property type="protein sequence ID" value="AAH48148.2"/>
    <property type="molecule type" value="mRNA"/>
</dbReference>
<dbReference type="EMBL" id="AF036007">
    <property type="protein sequence ID" value="AAC40061.1"/>
    <property type="molecule type" value="mRNA"/>
</dbReference>
<dbReference type="EMBL" id="AF036008">
    <property type="protein sequence ID" value="AAC53551.1"/>
    <property type="molecule type" value="Genomic_DNA"/>
</dbReference>
<dbReference type="EMBL" id="U70051">
    <property type="protein sequence ID" value="AAC52900.1"/>
    <property type="status" value="ALT_INIT"/>
    <property type="molecule type" value="mRNA"/>
</dbReference>
<dbReference type="EMBL" id="AK013247">
    <property type="protein sequence ID" value="BAB28743.1"/>
    <property type="molecule type" value="mRNA"/>
</dbReference>
<dbReference type="CCDS" id="CCDS57654.1">
    <molecule id="P13864-2"/>
</dbReference>
<dbReference type="CCDS" id="CCDS57655.1">
    <molecule id="P13864-1"/>
</dbReference>
<dbReference type="PIR" id="S01845">
    <property type="entry name" value="S01845"/>
</dbReference>
<dbReference type="RefSeq" id="NP_001186360.2">
    <molecule id="P13864-1"/>
    <property type="nucleotide sequence ID" value="NM_001199431.2"/>
</dbReference>
<dbReference type="RefSeq" id="NP_001186361.1">
    <property type="nucleotide sequence ID" value="NM_001199432.1"/>
</dbReference>
<dbReference type="RefSeq" id="NP_001186362.1">
    <molecule id="P13864-2"/>
    <property type="nucleotide sequence ID" value="NM_001199433.2"/>
</dbReference>
<dbReference type="RefSeq" id="NP_001300940.1">
    <property type="nucleotide sequence ID" value="NM_001314011.1"/>
</dbReference>
<dbReference type="RefSeq" id="NP_034196.5">
    <property type="nucleotide sequence ID" value="NM_010066.4"/>
</dbReference>
<dbReference type="PDB" id="3AV4">
    <property type="method" value="X-ray"/>
    <property type="resolution" value="2.75 A"/>
    <property type="chains" value="A=291-1620"/>
</dbReference>
<dbReference type="PDB" id="3AV5">
    <property type="method" value="X-ray"/>
    <property type="resolution" value="3.25 A"/>
    <property type="chains" value="A=291-1620"/>
</dbReference>
<dbReference type="PDB" id="3AV6">
    <property type="method" value="X-ray"/>
    <property type="resolution" value="3.09 A"/>
    <property type="chains" value="A=291-1620"/>
</dbReference>
<dbReference type="PDB" id="3PT6">
    <property type="method" value="X-ray"/>
    <property type="resolution" value="3.00 A"/>
    <property type="chains" value="A/B=650-1602"/>
</dbReference>
<dbReference type="PDB" id="3PT9">
    <property type="method" value="X-ray"/>
    <property type="resolution" value="2.50 A"/>
    <property type="chains" value="A=731-1602"/>
</dbReference>
<dbReference type="PDB" id="4DA4">
    <property type="method" value="X-ray"/>
    <property type="resolution" value="2.60 A"/>
    <property type="chains" value="A/B=731-1602"/>
</dbReference>
<dbReference type="PDB" id="5GUT">
    <property type="method" value="X-ray"/>
    <property type="resolution" value="2.10 A"/>
    <property type="chains" value="A=731-1602"/>
</dbReference>
<dbReference type="PDB" id="5GUV">
    <property type="method" value="X-ray"/>
    <property type="resolution" value="3.08 A"/>
    <property type="chains" value="A=731-1602"/>
</dbReference>
<dbReference type="PDB" id="5WY1">
    <property type="method" value="X-ray"/>
    <property type="resolution" value="3.27 A"/>
    <property type="chains" value="A=291-1620"/>
</dbReference>
<dbReference type="PDB" id="6W8V">
    <property type="method" value="X-ray"/>
    <property type="resolution" value="3.12 A"/>
    <property type="chains" value="A/B=731-1602"/>
</dbReference>
<dbReference type="PDB" id="6W8W">
    <property type="method" value="X-ray"/>
    <property type="resolution" value="3.00 A"/>
    <property type="chains" value="A/B=731-1602"/>
</dbReference>
<dbReference type="PDBsum" id="3AV4"/>
<dbReference type="PDBsum" id="3AV5"/>
<dbReference type="PDBsum" id="3AV6"/>
<dbReference type="PDBsum" id="3PT6"/>
<dbReference type="PDBsum" id="3PT9"/>
<dbReference type="PDBsum" id="4DA4"/>
<dbReference type="PDBsum" id="5GUT"/>
<dbReference type="PDBsum" id="5GUV"/>
<dbReference type="PDBsum" id="5WY1"/>
<dbReference type="PDBsum" id="6W8V"/>
<dbReference type="PDBsum" id="6W8W"/>
<dbReference type="SMR" id="P13864"/>
<dbReference type="BioGRID" id="199259">
    <property type="interactions" value="39"/>
</dbReference>
<dbReference type="CORUM" id="P13864"/>
<dbReference type="FunCoup" id="P13864">
    <property type="interactions" value="2377"/>
</dbReference>
<dbReference type="IntAct" id="P13864">
    <property type="interactions" value="12"/>
</dbReference>
<dbReference type="MINT" id="P13864"/>
<dbReference type="STRING" id="10090.ENSMUSP00000004202"/>
<dbReference type="BindingDB" id="P13864"/>
<dbReference type="ChEMBL" id="CHEMBL3351195"/>
<dbReference type="REBASE" id="2844">
    <property type="entry name" value="M.MmuDnmt1"/>
</dbReference>
<dbReference type="GlyGen" id="P13864">
    <property type="glycosylation" value="4 sites, 2 N-linked glycans (2 sites), 1 O-linked glycan (2 sites)"/>
</dbReference>
<dbReference type="iPTMnet" id="P13864"/>
<dbReference type="PhosphoSitePlus" id="P13864"/>
<dbReference type="SwissPalm" id="P13864"/>
<dbReference type="jPOST" id="P13864"/>
<dbReference type="PaxDb" id="10090-ENSMUSP00000004202"/>
<dbReference type="PeptideAtlas" id="P13864"/>
<dbReference type="ProteomicsDB" id="277482">
    <molecule id="P13864-1"/>
</dbReference>
<dbReference type="ProteomicsDB" id="277483">
    <molecule id="P13864-2"/>
</dbReference>
<dbReference type="Pumba" id="P13864"/>
<dbReference type="Antibodypedia" id="1052">
    <property type="antibodies" value="1564 antibodies from 50 providers"/>
</dbReference>
<dbReference type="DNASU" id="13433"/>
<dbReference type="Ensembl" id="ENSMUST00000004202.17">
    <molecule id="P13864-1"/>
    <property type="protein sequence ID" value="ENSMUSP00000004202.10"/>
    <property type="gene ID" value="ENSMUSG00000004099.17"/>
</dbReference>
<dbReference type="Ensembl" id="ENSMUST00000216540.2">
    <molecule id="P13864-2"/>
    <property type="protein sequence ID" value="ENSMUSP00000150433.2"/>
    <property type="gene ID" value="ENSMUSG00000004099.17"/>
</dbReference>
<dbReference type="GeneID" id="13433"/>
<dbReference type="KEGG" id="mmu:13433"/>
<dbReference type="UCSC" id="uc009ojo.2">
    <molecule id="P13864-1"/>
    <property type="organism name" value="mouse"/>
</dbReference>
<dbReference type="AGR" id="MGI:94912"/>
<dbReference type="CTD" id="1786"/>
<dbReference type="MGI" id="MGI:94912">
    <property type="gene designation" value="Dnmt1"/>
</dbReference>
<dbReference type="VEuPathDB" id="HostDB:ENSMUSG00000004099"/>
<dbReference type="eggNOG" id="ENOG502QPKK">
    <property type="taxonomic scope" value="Eukaryota"/>
</dbReference>
<dbReference type="GeneTree" id="ENSGT00390000005100"/>
<dbReference type="InParanoid" id="P13864"/>
<dbReference type="OMA" id="CKEMAPL"/>
<dbReference type="OrthoDB" id="5376140at2759"/>
<dbReference type="PhylomeDB" id="P13864"/>
<dbReference type="TreeFam" id="TF328926"/>
<dbReference type="BRENDA" id="2.1.1.37">
    <property type="organism ID" value="3474"/>
</dbReference>
<dbReference type="Reactome" id="R-MMU-212300">
    <property type="pathway name" value="PRC2 methylates histones and DNA"/>
</dbReference>
<dbReference type="Reactome" id="R-MMU-4655427">
    <property type="pathway name" value="SUMOylation of DNA methylation proteins"/>
</dbReference>
<dbReference type="BioGRID-ORCS" id="13433">
    <property type="hits" value="14 hits in 82 CRISPR screens"/>
</dbReference>
<dbReference type="ChiTaRS" id="Dnmt1">
    <property type="organism name" value="mouse"/>
</dbReference>
<dbReference type="EvolutionaryTrace" id="P13864"/>
<dbReference type="PRO" id="PR:P13864"/>
<dbReference type="Proteomes" id="UP000000589">
    <property type="component" value="Chromosome 9"/>
</dbReference>
<dbReference type="RNAct" id="P13864">
    <property type="molecule type" value="protein"/>
</dbReference>
<dbReference type="Bgee" id="ENSMUSG00000004099">
    <property type="expression patterns" value="Expressed in floor plate of midbrain and 318 other cell types or tissues"/>
</dbReference>
<dbReference type="ExpressionAtlas" id="P13864">
    <property type="expression patterns" value="baseline and differential"/>
</dbReference>
<dbReference type="GO" id="GO:0005737">
    <property type="term" value="C:cytoplasm"/>
    <property type="evidence" value="ECO:0007669"/>
    <property type="project" value="UniProtKB-SubCell"/>
</dbReference>
<dbReference type="GO" id="GO:0001674">
    <property type="term" value="C:female germ cell nucleus"/>
    <property type="evidence" value="ECO:0000314"/>
    <property type="project" value="MGI"/>
</dbReference>
<dbReference type="GO" id="GO:0043073">
    <property type="term" value="C:germ cell nucleus"/>
    <property type="evidence" value="ECO:0000314"/>
    <property type="project" value="MGI"/>
</dbReference>
<dbReference type="GO" id="GO:0000792">
    <property type="term" value="C:heterochromatin"/>
    <property type="evidence" value="ECO:0000314"/>
    <property type="project" value="MGI"/>
</dbReference>
<dbReference type="GO" id="GO:0005654">
    <property type="term" value="C:nucleoplasm"/>
    <property type="evidence" value="ECO:0000304"/>
    <property type="project" value="Reactome"/>
</dbReference>
<dbReference type="GO" id="GO:0005634">
    <property type="term" value="C:nucleus"/>
    <property type="evidence" value="ECO:0000314"/>
    <property type="project" value="MGI"/>
</dbReference>
<dbReference type="GO" id="GO:0005721">
    <property type="term" value="C:pericentric heterochromatin"/>
    <property type="evidence" value="ECO:0000314"/>
    <property type="project" value="UniProtKB"/>
</dbReference>
<dbReference type="GO" id="GO:0005657">
    <property type="term" value="C:replication fork"/>
    <property type="evidence" value="ECO:0000314"/>
    <property type="project" value="MGI"/>
</dbReference>
<dbReference type="GO" id="GO:0003682">
    <property type="term" value="F:chromatin binding"/>
    <property type="evidence" value="ECO:0000314"/>
    <property type="project" value="MGI"/>
</dbReference>
<dbReference type="GO" id="GO:0003886">
    <property type="term" value="F:DNA (cytosine-5-)-methyltransferase activity"/>
    <property type="evidence" value="ECO:0000314"/>
    <property type="project" value="MGI"/>
</dbReference>
<dbReference type="GO" id="GO:0051718">
    <property type="term" value="F:DNA (cytosine-5-)-methyltransferase activity, acting on CpG substrates"/>
    <property type="evidence" value="ECO:0000304"/>
    <property type="project" value="Reactome"/>
</dbReference>
<dbReference type="GO" id="GO:0003677">
    <property type="term" value="F:DNA binding"/>
    <property type="evidence" value="ECO:0000314"/>
    <property type="project" value="MGI"/>
</dbReference>
<dbReference type="GO" id="GO:0009008">
    <property type="term" value="F:DNA-methyltransferase activity"/>
    <property type="evidence" value="ECO:0000315"/>
    <property type="project" value="MGI"/>
</dbReference>
<dbReference type="GO" id="GO:0106222">
    <property type="term" value="F:lncRNA binding"/>
    <property type="evidence" value="ECO:0000314"/>
    <property type="project" value="MGI"/>
</dbReference>
<dbReference type="GO" id="GO:0008327">
    <property type="term" value="F:methyl-CpG binding"/>
    <property type="evidence" value="ECO:0000314"/>
    <property type="project" value="MGI"/>
</dbReference>
<dbReference type="GO" id="GO:0008168">
    <property type="term" value="F:methyltransferase activity"/>
    <property type="evidence" value="ECO:0000314"/>
    <property type="project" value="UniProtKB"/>
</dbReference>
<dbReference type="GO" id="GO:1990841">
    <property type="term" value="F:promoter-specific chromatin binding"/>
    <property type="evidence" value="ECO:0000250"/>
    <property type="project" value="UniProtKB"/>
</dbReference>
<dbReference type="GO" id="GO:0003723">
    <property type="term" value="F:RNA binding"/>
    <property type="evidence" value="ECO:0000314"/>
    <property type="project" value="MGI"/>
</dbReference>
<dbReference type="GO" id="GO:0008270">
    <property type="term" value="F:zinc ion binding"/>
    <property type="evidence" value="ECO:0000314"/>
    <property type="project" value="MGI"/>
</dbReference>
<dbReference type="GO" id="GO:0071230">
    <property type="term" value="P:cellular response to amino acid stimulus"/>
    <property type="evidence" value="ECO:0000314"/>
    <property type="project" value="MGI"/>
</dbReference>
<dbReference type="GO" id="GO:1903926">
    <property type="term" value="P:cellular response to bisphenol A"/>
    <property type="evidence" value="ECO:0000314"/>
    <property type="project" value="MGI"/>
</dbReference>
<dbReference type="GO" id="GO:0141119">
    <property type="term" value="P:chromosomal DNA methylation maintenance following DNA replication"/>
    <property type="evidence" value="ECO:0000314"/>
    <property type="project" value="MGI"/>
</dbReference>
<dbReference type="GO" id="GO:0006346">
    <property type="term" value="P:DNA methylation-dependent constitutive heterochromatin formation"/>
    <property type="evidence" value="ECO:0000314"/>
    <property type="project" value="UniProtKB"/>
</dbReference>
<dbReference type="GO" id="GO:0006351">
    <property type="term" value="P:DNA-templated transcription"/>
    <property type="evidence" value="ECO:0000315"/>
    <property type="project" value="MGI"/>
</dbReference>
<dbReference type="GO" id="GO:0043045">
    <property type="term" value="P:epigenetic programming of gene expression"/>
    <property type="evidence" value="ECO:0000315"/>
    <property type="project" value="MGI"/>
</dbReference>
<dbReference type="GO" id="GO:0032259">
    <property type="term" value="P:methylation"/>
    <property type="evidence" value="ECO:0007669"/>
    <property type="project" value="UniProtKB-KW"/>
</dbReference>
<dbReference type="GO" id="GO:0045892">
    <property type="term" value="P:negative regulation of DNA-templated transcription"/>
    <property type="evidence" value="ECO:0000315"/>
    <property type="project" value="MGI"/>
</dbReference>
<dbReference type="GO" id="GO:0010629">
    <property type="term" value="P:negative regulation of gene expression"/>
    <property type="evidence" value="ECO:0000315"/>
    <property type="project" value="MGI"/>
</dbReference>
<dbReference type="GO" id="GO:0044027">
    <property type="term" value="P:negative regulation of gene expression via chromosomal CpG island methylation"/>
    <property type="evidence" value="ECO:0000315"/>
    <property type="project" value="UniProtKB"/>
</dbReference>
<dbReference type="GO" id="GO:0000122">
    <property type="term" value="P:negative regulation of transcription by RNA polymerase II"/>
    <property type="evidence" value="ECO:0000314"/>
    <property type="project" value="MGI"/>
</dbReference>
<dbReference type="GO" id="GO:1905460">
    <property type="term" value="P:negative regulation of vascular associated smooth muscle cell apoptotic process"/>
    <property type="evidence" value="ECO:0007669"/>
    <property type="project" value="Ensembl"/>
</dbReference>
<dbReference type="GO" id="GO:1905931">
    <property type="term" value="P:negative regulation of vascular associated smooth muscle cell differentiation involved in phenotypic switching"/>
    <property type="evidence" value="ECO:0007669"/>
    <property type="project" value="Ensembl"/>
</dbReference>
<dbReference type="GO" id="GO:0010628">
    <property type="term" value="P:positive regulation of gene expression"/>
    <property type="evidence" value="ECO:0007669"/>
    <property type="project" value="Ensembl"/>
</dbReference>
<dbReference type="GO" id="GO:1904707">
    <property type="term" value="P:positive regulation of vascular associated smooth muscle cell proliferation"/>
    <property type="evidence" value="ECO:0007669"/>
    <property type="project" value="Ensembl"/>
</dbReference>
<dbReference type="GO" id="GO:0042127">
    <property type="term" value="P:regulation of cell population proliferation"/>
    <property type="evidence" value="ECO:0000316"/>
    <property type="project" value="MGI"/>
</dbReference>
<dbReference type="GO" id="GO:0010468">
    <property type="term" value="P:regulation of gene expression"/>
    <property type="evidence" value="ECO:0000315"/>
    <property type="project" value="MGI"/>
</dbReference>
<dbReference type="CDD" id="cd04760">
    <property type="entry name" value="BAH_Dnmt1_I"/>
    <property type="match status" value="1"/>
</dbReference>
<dbReference type="CDD" id="cd04711">
    <property type="entry name" value="BAH_Dnmt1_II"/>
    <property type="match status" value="1"/>
</dbReference>
<dbReference type="FunFam" id="1.10.10.2230:FF:000001">
    <property type="entry name" value="DNA (cytosine-5)-methyltransferase"/>
    <property type="match status" value="1"/>
</dbReference>
<dbReference type="FunFam" id="2.30.30.490:FF:000004">
    <property type="entry name" value="DNA (cytosine-5)-methyltransferase"/>
    <property type="match status" value="1"/>
</dbReference>
<dbReference type="FunFam" id="3.40.50.150:FF:000036">
    <property type="entry name" value="DNA (cytosine-5)-methyltransferase"/>
    <property type="match status" value="1"/>
</dbReference>
<dbReference type="FunFam" id="3.40.50.150:FF:000108">
    <property type="entry name" value="DNA (cytosine-5)-methyltransferase"/>
    <property type="match status" value="1"/>
</dbReference>
<dbReference type="FunFam" id="3.90.120.10:FF:000001">
    <property type="entry name" value="DNA (cytosine-5)-methyltransferase"/>
    <property type="match status" value="1"/>
</dbReference>
<dbReference type="Gene3D" id="1.10.10.2230">
    <property type="match status" value="1"/>
</dbReference>
<dbReference type="Gene3D" id="2.30.30.490">
    <property type="match status" value="2"/>
</dbReference>
<dbReference type="Gene3D" id="3.90.120.10">
    <property type="entry name" value="DNA Methylase, subunit A, domain 2"/>
    <property type="match status" value="1"/>
</dbReference>
<dbReference type="Gene3D" id="3.40.50.150">
    <property type="entry name" value="Vaccinia Virus protein VP39"/>
    <property type="match status" value="1"/>
</dbReference>
<dbReference type="InterPro" id="IPR001025">
    <property type="entry name" value="BAH_dom"/>
</dbReference>
<dbReference type="InterPro" id="IPR043151">
    <property type="entry name" value="BAH_sf"/>
</dbReference>
<dbReference type="InterPro" id="IPR050390">
    <property type="entry name" value="C5-Methyltransferase"/>
</dbReference>
<dbReference type="InterPro" id="IPR018117">
    <property type="entry name" value="C5_DNA_meth_AS"/>
</dbReference>
<dbReference type="InterPro" id="IPR001525">
    <property type="entry name" value="C5_MeTfrase"/>
</dbReference>
<dbReference type="InterPro" id="IPR031303">
    <property type="entry name" value="C5_meth_CS"/>
</dbReference>
<dbReference type="InterPro" id="IPR022702">
    <property type="entry name" value="Cytosine_MeTrfase1_RFD"/>
</dbReference>
<dbReference type="InterPro" id="IPR010506">
    <property type="entry name" value="DMAP1-bd"/>
</dbReference>
<dbReference type="InterPro" id="IPR017198">
    <property type="entry name" value="DNMT1-like"/>
</dbReference>
<dbReference type="InterPro" id="IPR029063">
    <property type="entry name" value="SAM-dependent_MTases_sf"/>
</dbReference>
<dbReference type="InterPro" id="IPR002857">
    <property type="entry name" value="Znf_CXXC"/>
</dbReference>
<dbReference type="PANTHER" id="PTHR10629">
    <property type="entry name" value="CYTOSINE-SPECIFIC METHYLTRANSFERASE"/>
    <property type="match status" value="1"/>
</dbReference>
<dbReference type="PANTHER" id="PTHR10629:SF52">
    <property type="entry name" value="DNA (CYTOSINE-5)-METHYLTRANSFERASE 1"/>
    <property type="match status" value="1"/>
</dbReference>
<dbReference type="Pfam" id="PF01426">
    <property type="entry name" value="BAH"/>
    <property type="match status" value="2"/>
</dbReference>
<dbReference type="Pfam" id="PF06464">
    <property type="entry name" value="DMAP_binding"/>
    <property type="match status" value="1"/>
</dbReference>
<dbReference type="Pfam" id="PF00145">
    <property type="entry name" value="DNA_methylase"/>
    <property type="match status" value="1"/>
</dbReference>
<dbReference type="Pfam" id="PF12047">
    <property type="entry name" value="DNMT1-RFD"/>
    <property type="match status" value="1"/>
</dbReference>
<dbReference type="Pfam" id="PF02008">
    <property type="entry name" value="zf-CXXC"/>
    <property type="match status" value="1"/>
</dbReference>
<dbReference type="PIRSF" id="PIRSF037404">
    <property type="entry name" value="DNMT1"/>
    <property type="match status" value="1"/>
</dbReference>
<dbReference type="PRINTS" id="PR00105">
    <property type="entry name" value="C5METTRFRASE"/>
</dbReference>
<dbReference type="SMART" id="SM00439">
    <property type="entry name" value="BAH"/>
    <property type="match status" value="2"/>
</dbReference>
<dbReference type="SMART" id="SM01137">
    <property type="entry name" value="DMAP_binding"/>
    <property type="match status" value="1"/>
</dbReference>
<dbReference type="SUPFAM" id="SSF53335">
    <property type="entry name" value="S-adenosyl-L-methionine-dependent methyltransferases"/>
    <property type="match status" value="1"/>
</dbReference>
<dbReference type="PROSITE" id="PS51038">
    <property type="entry name" value="BAH"/>
    <property type="match status" value="2"/>
</dbReference>
<dbReference type="PROSITE" id="PS00094">
    <property type="entry name" value="C5_MTASE_1"/>
    <property type="match status" value="1"/>
</dbReference>
<dbReference type="PROSITE" id="PS00095">
    <property type="entry name" value="C5_MTASE_2"/>
    <property type="match status" value="1"/>
</dbReference>
<dbReference type="PROSITE" id="PS51912">
    <property type="entry name" value="DMAP1_BIND"/>
    <property type="match status" value="1"/>
</dbReference>
<dbReference type="PROSITE" id="PS51679">
    <property type="entry name" value="SAM_MT_C5"/>
    <property type="match status" value="1"/>
</dbReference>
<dbReference type="PROSITE" id="PS51058">
    <property type="entry name" value="ZF_CXXC"/>
    <property type="match status" value="1"/>
</dbReference>
<gene>
    <name type="primary">Dnmt1</name>
    <name type="synonym">Dnmt</name>
    <name type="synonym">Met1</name>
    <name type="synonym">Uim</name>
</gene>
<protein>
    <recommendedName>
        <fullName>DNA (cytosine-5)-methyltransferase 1</fullName>
        <shortName>Dnmt1</shortName>
        <shortName>Met-1</shortName>
        <ecNumber>2.1.1.37</ecNumber>
    </recommendedName>
    <alternativeName>
        <fullName>DNA methyltransferase MmuI</fullName>
        <shortName>DNA MTase MmuI</shortName>
        <shortName>M.MmuI</shortName>
    </alternativeName>
    <alternativeName>
        <fullName>MCMT</fullName>
    </alternativeName>
</protein>
<comment type="function">
    <text evidence="2 12 13 17">Methylates CpG residues. Preferentially methylates hemimethylated DNA. Associates with DNA replication sites in S phase maintaining the methylation pattern in the newly synthesized strand, that is essential for epigenetic inheritance. Associates with chromatin during G2 and M phases to maintain DNA methylation independently of replication. It is responsible for maintaining methylation patterns established in development. DNA methylation is coordinated with methylation of histones. Mediates transcriptional repression by direct binding to HDAC2. In association with DNMT3B and via the recruitment of CTCFL/BORIS, involved in activation of BAG1 gene expression by modulating dimethylation of promoter histone H3 at H3K4 and H3K9. Probably forms a corepressor complex required for activated KRAS-mediated promoter hypermethylation and transcriptional silencing of tumor suppressor genes (TSGs) or other tumor-related genes in colorectal cancer (CRC) cells (By similarity). Also required to maintain a transcriptionally repressive state of genes in undifferentiated embryonic stem cells (ESCs) (By similarity). Associates at promoter regions of tumor suppressor genes (TSGs) leading to their gene silencing (By similarity). Promotes tumor growth (By similarity).</text>
</comment>
<comment type="catalytic activity">
    <reaction evidence="8">
        <text>a 2'-deoxycytidine in DNA + S-adenosyl-L-methionine = a 5-methyl-2'-deoxycytidine in DNA + S-adenosyl-L-homocysteine + H(+)</text>
        <dbReference type="Rhea" id="RHEA:13681"/>
        <dbReference type="Rhea" id="RHEA-COMP:11369"/>
        <dbReference type="Rhea" id="RHEA-COMP:11370"/>
        <dbReference type="ChEBI" id="CHEBI:15378"/>
        <dbReference type="ChEBI" id="CHEBI:57856"/>
        <dbReference type="ChEBI" id="CHEBI:59789"/>
        <dbReference type="ChEBI" id="CHEBI:85452"/>
        <dbReference type="ChEBI" id="CHEBI:85454"/>
        <dbReference type="EC" id="2.1.1.37"/>
    </reaction>
</comment>
<comment type="activity regulation">
    <text evidence="15">Allosterically regulated. The binding of 5-methylcytosine-containing DNA to the N-terminal parts of DNMT1 causes an allosteric activation of the catalytic domain by a direct interaction of its Zn-binding domain with the catalytic domain.</text>
</comment>
<comment type="subunit">
    <text evidence="2 10 11 14 16 19 21 22">Homodimer (By similarity). Forms a stable complex with E2F1, BB1 and HDAC1 (By similarity). Forms a complex with DMAP1 and HDAC2, with direct interaction (PubMed:10888872). Interacts with the PRC2/EED-EZH2 complex (PubMed:16357870). Probably part of a corepressor complex containing ZNF304, TRIM28, SETDB1 and DNMT1 (By similarity). Interacts with UHRF1; promoting its recruitment to hemimethylated DNA (PubMed:21268065). Interacts with USP7, promoting its deubiquitination (PubMed:21268065). Interacts with BAZ2A/TIP5 (PubMed:16085498). Interacts with PCNA (By similarity). Interacts with MBD2 and MBD3 (By similarity). Interacts with DNMT3A and DNMT3B (By similarity). Interacts with UBC9 (By similarity). Interacts with HDAC1 (PubMed:10615135). Interacts with CSNK1D (PubMed:20192920). Interacts with SIRT7 (PubMed:28842251). Interacts with ZNF263; recruited to the SIX3 promoter along with other proteins involved in chromatin modification and transcriptional corepression where it contributes to transcriptional repression (By similarity). Interacts with L3MBTL3 and DCAF5; the interaction requires DNMT1 methylation at Lys-139 and is necessary to target DNMT1 for ubiquitination by the CRL4-DCAF5 E3 ubiquitin ligase complex and proteasomal degradation (By similarity). Interacts with PHF20L1; the interaction requires DNMT1 methylation at Lys-139 and protects DNMT1 from ubiquitination and proteasomal degradation (By similarity).</text>
</comment>
<comment type="interaction">
    <interactant intactId="EBI-301927">
        <id>P13864</id>
    </interactant>
    <interactant intactId="EBI-301912">
        <id>O09106</id>
        <label>Hdac1</label>
    </interactant>
    <organismsDiffer>false</organismsDiffer>
    <experiments>3</experiments>
</comment>
<comment type="subcellular location">
    <subcellularLocation>
        <location evidence="12">Nucleus</location>
    </subcellularLocation>
    <subcellularLocation>
        <location evidence="12">Cytoplasm</location>
    </subcellularLocation>
    <text>It is nucleoplasmic through most of the cell cycle and associates with replication foci during S-phase. In germ cells, spermatogonia, preleptotene and leptotene spermatocytes all express high levels of nuclear protein, while the protein is not detected in pachytene spermatocytes, despite the fact they expressed high levels of mRNA. In females, the protein is not detected in non-growing oocytes, in contrast to the growing oocytes. During the growing, the protein is no longer detectable in nuclei but accumulates to very high levels first throughout the cytoplasm. At the time of ovulation, all the protein is cytoplasmic and is actively associated with the oocyte cortex. After fecondation, in the preimplantation embryo, the protein remains cytoplasmic and after implantation, it is exclusively nuclear in all tissue types. Isoform 2 is sequestered in the cytoplasm of maturing oocytes and of preimplantation embryos, except for the 8-cell stage, while isoform 1 is exclusively nuclear.</text>
</comment>
<comment type="alternative products">
    <event type="alternative splicing"/>
    <isoform>
        <id>P13864-1</id>
        <name>1</name>
        <name>Long</name>
        <sequence type="displayed"/>
    </isoform>
    <isoform>
        <id>P13864-2</id>
        <name>2</name>
        <name>Short</name>
        <sequence type="described" ref="VSP_005619"/>
    </isoform>
</comment>
<comment type="tissue specificity">
    <text>Isoform 1 is expressed in embryonic stem cells and in somatic tissues. Isoform 2 is expressed in oocytes, preimplantation embryos, testis and in skeletal muscle during myogenesis.</text>
</comment>
<comment type="developmental stage">
    <text>In germ cells, it is present at high levels in spermatogonia and spermatocytes until the pachytene stage, where it falls to undetectable levels. The transient drop at the pachytene stage coincides with the disappearance of the 5.2 kb mRNA and the accumulation of a larger 6.0 kb mRNA. Oocytes accumulate very large amounts of Dnmt1 protein during the growth phase.</text>
</comment>
<comment type="domain">
    <text>The N-terminal part is required for homodimerization and acts as a regulatory domain.</text>
</comment>
<comment type="domain">
    <text evidence="20">The CXXC-type zinc finger specifically binds to unmethylated CpG dinucleotides, positioning the autoinhibitory linker between the DNA and the active site, thus providing a mechanism to ensure that only hemimethylated CpG dinucleotides undergo methylation.</text>
</comment>
<comment type="PTM">
    <text evidence="2">Sumoylated; sumoylation increases activity.</text>
</comment>
<comment type="PTM">
    <text evidence="18 19 23">Phosphorylation at Ser-146 by CK1 reduces DNA-binding activity.</text>
</comment>
<comment type="PTM">
    <text evidence="2">Acetylation on multiple lysines, mainly by KAT2B/PCAF, regulates cell cycle G(2)/M transition. Deacetylation of Lys-1352 and Lys-1418 by SIRT1 increases methyltransferase activity.</text>
</comment>
<comment type="PTM">
    <text evidence="2">Phosphorylation of Ser-152 by CDKs is important for enzymatic activity and protein stability. Phosphorylation of Ser-140 by AKT1 prevents methylation by SETD7 thereby increasing DNMT1 stability.</text>
</comment>
<comment type="PTM">
    <text evidence="2">Methylation at Lys-139 by SETD7 is necessary for the regulation of DNMT1 proteasomal degradation.</text>
</comment>
<comment type="PTM">
    <text evidence="21">Ubiquitinated by UHRF1; interaction with USP7 counteracts ubiquitination by UHRF1 by promoting deubiquitination and preventing degradation by the proteasome.</text>
</comment>
<comment type="miscellaneous">
    <text>There are three 5' exons, one specific to the oocyte (1c), one specific to the pachytene spermatocyte and also found in skeletal muscle (1b) and one found in somatic cells (1a). Three different mRNAs can be produced which give rise to two different translation products: isoform 1 (mRNAs-1a) and isoform 2 (mRNA-1b or -1c). Association of DNMT1 with the replication machinery is not strictly required for maintaining global methylation but still enhances methylation efficiency by 2-fold. Pre-existing cytosine methylation at CpG and non-CpG sites enhances methylation activity.</text>
</comment>
<comment type="similarity">
    <text evidence="6">Belongs to the class I-like SAM-binding methyltransferase superfamily. C5-methyltransferase family.</text>
</comment>
<comment type="sequence caution" evidence="27">
    <conflict type="erroneous initiation">
        <sequence resource="EMBL-CDS" id="AAC52900"/>
    </conflict>
    <text>Extended N-terminus.</text>
</comment>
<reference key="1">
    <citation type="journal article" date="1988" name="J. Mol. Biol.">
        <title>Cloning and sequencing of a cDNA encoding DNA methyltransferase of mouse cells. The carboxyl-terminal domain of the mammalian enzymes is related to bacterial restriction methyltransferases.</title>
        <authorList>
            <person name="Bestor T.H."/>
            <person name="Laudano A."/>
            <person name="Mattaliano R."/>
            <person name="Ingram V."/>
        </authorList>
    </citation>
    <scope>NUCLEOTIDE SEQUENCE [MRNA] (ISOFORM 1)</scope>
</reference>
<reference key="2">
    <citation type="journal article" date="1996" name="J. Biol. Chem.">
        <title>New 5' regions of the murine and human genes for DNA (cytosine-5)-methyltransferase.</title>
        <authorList>
            <person name="Yoder J.A."/>
            <person name="Yen R.-W.C."/>
            <person name="Vertino P.M."/>
            <person name="Bestor T.H."/>
            <person name="Baylin S.B."/>
        </authorList>
    </citation>
    <scope>SEQUENCE REVISION TO N-TERMINUS</scope>
    <source>
        <tissue>Embryo</tissue>
    </source>
</reference>
<reference key="3">
    <citation type="journal article" date="2000" name="Cell Growth Differ.">
        <title>Expression of an alternative Dnmt1 isoform during muscle differentiation.</title>
        <authorList>
            <person name="Aguirre-Arteta A.M."/>
            <person name="Grunewald I."/>
            <person name="Cardoso M.C."/>
            <person name="Leonhardt H."/>
        </authorList>
    </citation>
    <scope>NUCLEOTIDE SEQUENCE [MRNA] (ISOFORM 2)</scope>
    <source>
        <strain>C57BL/6J</strain>
        <tissue>Skeletal muscle</tissue>
    </source>
</reference>
<reference key="4">
    <citation type="journal article" date="2000" name="J. Mol. Biol.">
        <title>Structure and function of the mouse DNA methyltransferase gene: Dnmt1 shows a tripartite structure.</title>
        <authorList>
            <person name="Margot J.B."/>
            <person name="Aguirre-Arteta A.M."/>
            <person name="Di Giacco B.V."/>
            <person name="Pradhan S."/>
            <person name="Roberts R.J."/>
            <person name="Cardoso M.C."/>
            <person name="Leonhardt H."/>
        </authorList>
    </citation>
    <scope>NUCLEOTIDE SEQUENCE [GENOMIC DNA / MRNA] (ISOFORMS 1 AND 2)</scope>
    <source>
        <strain>C57BL/6J</strain>
    </source>
</reference>
<reference key="5">
    <citation type="journal article" date="2004" name="Genome Res.">
        <title>The status, quality, and expansion of the NIH full-length cDNA project: the Mammalian Gene Collection (MGC).</title>
        <authorList>
            <consortium name="The MGC Project Team"/>
        </authorList>
    </citation>
    <scope>NUCLEOTIDE SEQUENCE [LARGE SCALE MRNA] (ISOFORM 1)</scope>
    <source>
        <strain>C57BL/6J</strain>
        <tissue>Brain</tissue>
    </source>
</reference>
<reference key="6">
    <citation type="journal article" date="1998" name="Development">
        <title>Sex-specific exons control DNA methyltransferase in mammalian germ cells.</title>
        <authorList>
            <person name="Mertineit C."/>
            <person name="Yoder J.A."/>
            <person name="Taketo T."/>
            <person name="Laird D.W."/>
            <person name="Trasler J.M."/>
            <person name="Bestor T.H."/>
        </authorList>
    </citation>
    <scope>NUCLEOTIDE SEQUENCE [GENOMIC DNA / MRNA] OF 1-27 AND 119-1619 (ISOFORMS 1 AND 2)</scope>
</reference>
<reference key="7">
    <citation type="journal article" date="1998" name="J. Biol. Chem.">
        <title>A short DNA methyltransferase isoform restores methylation in vivo.</title>
        <authorList>
            <person name="Gaudet F."/>
            <person name="Talbot D."/>
            <person name="Leonhardt H."/>
            <person name="Jaenisch R."/>
        </authorList>
    </citation>
    <scope>NUCLEOTIDE SEQUENCE OF 1-144 (ISOFORMS 1 AND 2)</scope>
    <scope>PROTEIN SEQUENCE OF 3-6</scope>
    <source>
        <strain>129/Sv</strain>
        <strain>BALB/cJ</strain>
        <tissue>Embryonic stem cell</tissue>
    </source>
</reference>
<reference key="8">
    <citation type="journal article" date="1996" name="Proc. Natl. Acad. Sci. U.S.A.">
        <title>Complementation of methylation deficiency in embryonic stem cells by a DNA methyltransferase minigene.</title>
        <authorList>
            <person name="Tucker K.L."/>
            <person name="Talbot D."/>
            <person name="Lee M.A."/>
            <person name="Leonhardt H."/>
            <person name="Jaenisch R."/>
        </authorList>
    </citation>
    <scope>NUCLEOTIDE SEQUENCE [MRNA] OF 1-119 (ISOFORM 1)</scope>
    <source>
        <strain>129/Sv</strain>
        <tissue>Embryonic stem cell</tissue>
        <tissue>Kidney</tissue>
    </source>
</reference>
<reference key="9">
    <citation type="journal article" date="2005" name="Science">
        <title>The transcriptional landscape of the mammalian genome.</title>
        <authorList>
            <person name="Carninci P."/>
            <person name="Kasukawa T."/>
            <person name="Katayama S."/>
            <person name="Gough J."/>
            <person name="Frith M.C."/>
            <person name="Maeda N."/>
            <person name="Oyama R."/>
            <person name="Ravasi T."/>
            <person name="Lenhard B."/>
            <person name="Wells C."/>
            <person name="Kodzius R."/>
            <person name="Shimokawa K."/>
            <person name="Bajic V.B."/>
            <person name="Brenner S.E."/>
            <person name="Batalov S."/>
            <person name="Forrest A.R."/>
            <person name="Zavolan M."/>
            <person name="Davis M.J."/>
            <person name="Wilming L.G."/>
            <person name="Aidinis V."/>
            <person name="Allen J.E."/>
            <person name="Ambesi-Impiombato A."/>
            <person name="Apweiler R."/>
            <person name="Aturaliya R.N."/>
            <person name="Bailey T.L."/>
            <person name="Bansal M."/>
            <person name="Baxter L."/>
            <person name="Beisel K.W."/>
            <person name="Bersano T."/>
            <person name="Bono H."/>
            <person name="Chalk A.M."/>
            <person name="Chiu K.P."/>
            <person name="Choudhary V."/>
            <person name="Christoffels A."/>
            <person name="Clutterbuck D.R."/>
            <person name="Crowe M.L."/>
            <person name="Dalla E."/>
            <person name="Dalrymple B.P."/>
            <person name="de Bono B."/>
            <person name="Della Gatta G."/>
            <person name="di Bernardo D."/>
            <person name="Down T."/>
            <person name="Engstrom P."/>
            <person name="Fagiolini M."/>
            <person name="Faulkner G."/>
            <person name="Fletcher C.F."/>
            <person name="Fukushima T."/>
            <person name="Furuno M."/>
            <person name="Futaki S."/>
            <person name="Gariboldi M."/>
            <person name="Georgii-Hemming P."/>
            <person name="Gingeras T.R."/>
            <person name="Gojobori T."/>
            <person name="Green R.E."/>
            <person name="Gustincich S."/>
            <person name="Harbers M."/>
            <person name="Hayashi Y."/>
            <person name="Hensch T.K."/>
            <person name="Hirokawa N."/>
            <person name="Hill D."/>
            <person name="Huminiecki L."/>
            <person name="Iacono M."/>
            <person name="Ikeo K."/>
            <person name="Iwama A."/>
            <person name="Ishikawa T."/>
            <person name="Jakt M."/>
            <person name="Kanapin A."/>
            <person name="Katoh M."/>
            <person name="Kawasawa Y."/>
            <person name="Kelso J."/>
            <person name="Kitamura H."/>
            <person name="Kitano H."/>
            <person name="Kollias G."/>
            <person name="Krishnan S.P."/>
            <person name="Kruger A."/>
            <person name="Kummerfeld S.K."/>
            <person name="Kurochkin I.V."/>
            <person name="Lareau L.F."/>
            <person name="Lazarevic D."/>
            <person name="Lipovich L."/>
            <person name="Liu J."/>
            <person name="Liuni S."/>
            <person name="McWilliam S."/>
            <person name="Madan Babu M."/>
            <person name="Madera M."/>
            <person name="Marchionni L."/>
            <person name="Matsuda H."/>
            <person name="Matsuzawa S."/>
            <person name="Miki H."/>
            <person name="Mignone F."/>
            <person name="Miyake S."/>
            <person name="Morris K."/>
            <person name="Mottagui-Tabar S."/>
            <person name="Mulder N."/>
            <person name="Nakano N."/>
            <person name="Nakauchi H."/>
            <person name="Ng P."/>
            <person name="Nilsson R."/>
            <person name="Nishiguchi S."/>
            <person name="Nishikawa S."/>
            <person name="Nori F."/>
            <person name="Ohara O."/>
            <person name="Okazaki Y."/>
            <person name="Orlando V."/>
            <person name="Pang K.C."/>
            <person name="Pavan W.J."/>
            <person name="Pavesi G."/>
            <person name="Pesole G."/>
            <person name="Petrovsky N."/>
            <person name="Piazza S."/>
            <person name="Reed J."/>
            <person name="Reid J.F."/>
            <person name="Ring B.Z."/>
            <person name="Ringwald M."/>
            <person name="Rost B."/>
            <person name="Ruan Y."/>
            <person name="Salzberg S.L."/>
            <person name="Sandelin A."/>
            <person name="Schneider C."/>
            <person name="Schoenbach C."/>
            <person name="Sekiguchi K."/>
            <person name="Semple C.A."/>
            <person name="Seno S."/>
            <person name="Sessa L."/>
            <person name="Sheng Y."/>
            <person name="Shibata Y."/>
            <person name="Shimada H."/>
            <person name="Shimada K."/>
            <person name="Silva D."/>
            <person name="Sinclair B."/>
            <person name="Sperling S."/>
            <person name="Stupka E."/>
            <person name="Sugiura K."/>
            <person name="Sultana R."/>
            <person name="Takenaka Y."/>
            <person name="Taki K."/>
            <person name="Tammoja K."/>
            <person name="Tan S.L."/>
            <person name="Tang S."/>
            <person name="Taylor M.S."/>
            <person name="Tegner J."/>
            <person name="Teichmann S.A."/>
            <person name="Ueda H.R."/>
            <person name="van Nimwegen E."/>
            <person name="Verardo R."/>
            <person name="Wei C.L."/>
            <person name="Yagi K."/>
            <person name="Yamanishi H."/>
            <person name="Zabarovsky E."/>
            <person name="Zhu S."/>
            <person name="Zimmer A."/>
            <person name="Hide W."/>
            <person name="Bult C."/>
            <person name="Grimmond S.M."/>
            <person name="Teasdale R.D."/>
            <person name="Liu E.T."/>
            <person name="Brusic V."/>
            <person name="Quackenbush J."/>
            <person name="Wahlestedt C."/>
            <person name="Mattick J.S."/>
            <person name="Hume D.A."/>
            <person name="Kai C."/>
            <person name="Sasaki D."/>
            <person name="Tomaru Y."/>
            <person name="Fukuda S."/>
            <person name="Kanamori-Katayama M."/>
            <person name="Suzuki M."/>
            <person name="Aoki J."/>
            <person name="Arakawa T."/>
            <person name="Iida J."/>
            <person name="Imamura K."/>
            <person name="Itoh M."/>
            <person name="Kato T."/>
            <person name="Kawaji H."/>
            <person name="Kawagashira N."/>
            <person name="Kawashima T."/>
            <person name="Kojima M."/>
            <person name="Kondo S."/>
            <person name="Konno H."/>
            <person name="Nakano K."/>
            <person name="Ninomiya N."/>
            <person name="Nishio T."/>
            <person name="Okada M."/>
            <person name="Plessy C."/>
            <person name="Shibata K."/>
            <person name="Shiraki T."/>
            <person name="Suzuki S."/>
            <person name="Tagami M."/>
            <person name="Waki K."/>
            <person name="Watahiki A."/>
            <person name="Okamura-Oho Y."/>
            <person name="Suzuki H."/>
            <person name="Kawai J."/>
            <person name="Hayashizaki Y."/>
        </authorList>
    </citation>
    <scope>NUCLEOTIDE SEQUENCE [LARGE SCALE MRNA] OF 1-272 (ISOFORM 1)</scope>
    <source>
        <strain>C57BL/6J</strain>
        <tissue>Embryo</tissue>
    </source>
</reference>
<reference key="10">
    <citation type="journal article" date="1992" name="EMBO J.">
        <title>Activation of mammalian DNA methyltransferase by cleavage of a Zn binding regulatory domain.</title>
        <authorList>
            <person name="Bestor T.H."/>
        </authorList>
    </citation>
    <scope>PROTEIN SEQUENCE OF 1108-1154</scope>
    <scope>ACTIVITY REGULATION</scope>
</reference>
<reference key="11">
    <citation type="journal article" date="1997" name="J. Biol. Chem.">
        <title>Peptide mapping of the murine DNA methyltransferase reveals a major phosphorylation site and the start of translation.</title>
        <authorList>
            <person name="Glickman J.F."/>
            <person name="Pavlovich J.G."/>
            <person name="Reich N.O."/>
        </authorList>
    </citation>
    <scope>PHOSPHORYLATION AT SER-515</scope>
    <scope>IDENTIFICATION BY MASS SPECTROMETRY</scope>
    <source>
        <tissue>Erythroleukemia</tissue>
    </source>
</reference>
<reference key="12">
    <citation type="journal article" date="2000" name="Nat. Genet.">
        <title>DNA methyltransferase Dnmt1 associates with histone deacetylase activity.</title>
        <authorList>
            <person name="Fuks F."/>
            <person name="Burgers W.A."/>
            <person name="Brehm A."/>
            <person name="Hughes-Davies L."/>
            <person name="Kouzarides T."/>
        </authorList>
    </citation>
    <scope>INTERACTION WITH HDAC1</scope>
</reference>
<reference key="13">
    <citation type="journal article" date="2000" name="Nat. Genet.">
        <title>DNMT1 binds HDAC2 and a new co-repressor, DMAP1, to form a complex at replication foci.</title>
        <authorList>
            <person name="Rountree M.R."/>
            <person name="Bachman K.E."/>
            <person name="Baylin S.B."/>
        </authorList>
    </citation>
    <scope>INTERACTION WITH HDAC2 AND DMAP1</scope>
</reference>
<reference key="14">
    <citation type="journal article" date="2001" name="Cell">
        <title>Genomic imprinting disrupted by a maternal effect mutation in the Dnmt1 gene.</title>
        <authorList>
            <person name="Howell C.Y."/>
            <person name="Bestor T.H."/>
            <person name="Ding F."/>
            <person name="Latham K.E."/>
            <person name="Mertineit C."/>
            <person name="Trasler J.M."/>
            <person name="Chaillet J.R."/>
        </authorList>
    </citation>
    <scope>FUNCTION</scope>
    <scope>SUBCELLULAR LOCATION</scope>
</reference>
<reference key="15">
    <citation type="journal article" date="2001" name="J. Mol. Biol.">
        <title>The activity of the murine DNA methyltransferase Dnmt1 is controlled by interaction of the catalytic domain with the N-terminal part of the enzyme leading to an allosteric activation of the enzyme after binding to methylated DNA.</title>
        <authorList>
            <person name="Fatemi M."/>
            <person name="Hermann A."/>
            <person name="Pradhan S."/>
            <person name="Jeltsch A."/>
        </authorList>
    </citation>
    <scope>ALLOSTERIC REGULATION</scope>
</reference>
<reference key="16">
    <citation type="journal article" date="2004" name="EMBO Rep.">
        <title>Replication-independent chromatin loading of Dnmt1 during G2 and M phases.</title>
        <authorList>
            <person name="Easwaran H.P."/>
            <person name="Schermelleh L."/>
            <person name="Leonhardt H."/>
            <person name="Cardoso M.C."/>
        </authorList>
    </citation>
    <scope>FUNCTION</scope>
</reference>
<reference key="17">
    <citation type="journal article" date="2005" name="Curr. Biol.">
        <title>The PHD finger/bromodomain of NoRC interacts with acetylated histone H4K16 and is sufficient for rDNA silencing.</title>
        <authorList>
            <person name="Zhou Y."/>
            <person name="Grummt I."/>
        </authorList>
    </citation>
    <scope>INTERACTION WITH BAZ2A</scope>
</reference>
<reference key="18">
    <citation type="journal article" date="2006" name="Nature">
        <title>The Polycomb group protein EZH2 directly controls DNA methylation.</title>
        <authorList>
            <person name="Vire E."/>
            <person name="Brenner C."/>
            <person name="Deplus R."/>
            <person name="Blanchon L."/>
            <person name="Fraga M."/>
            <person name="Didelot C."/>
            <person name="Morey L."/>
            <person name="Van Eynde A."/>
            <person name="Bernard D."/>
            <person name="Vanderwinden J.-M."/>
            <person name="Bollen M."/>
            <person name="Esteller M."/>
            <person name="Di Croce L."/>
            <person name="de Launoit Y."/>
            <person name="Fuks F."/>
        </authorList>
    </citation>
    <scope>INTERACTION WITH THE PRC2 COMPLEX</scope>
</reference>
<reference key="19">
    <citation type="journal article" date="2006" name="Nature">
        <authorList>
            <person name="Vire E."/>
            <person name="Brenner C."/>
            <person name="Deplus R."/>
            <person name="Blanchon L."/>
            <person name="Fraga M."/>
            <person name="Didelot C."/>
            <person name="Morey L."/>
            <person name="Van Eynde A."/>
            <person name="Bernard D."/>
            <person name="Vanderwinden J.-M."/>
            <person name="Bollen M."/>
            <person name="Esteller M."/>
            <person name="Di Croce L."/>
            <person name="de Launoit Y."/>
            <person name="Fuks F."/>
        </authorList>
    </citation>
    <scope>ERRATUM OF PUBMED:16357870</scope>
</reference>
<reference key="20">
    <citation type="journal article" date="2007" name="Epigenetics">
        <title>Phosphorylation of serine-515 activates the mammalian maintenance methyltransferase Dnmt1.</title>
        <authorList>
            <person name="Goyal R."/>
            <person name="Rathert P."/>
            <person name="Laser H."/>
            <person name="Gowher H."/>
            <person name="Jeltsch A."/>
        </authorList>
    </citation>
    <scope>PHOSPHORYLATION AT SER-515</scope>
    <scope>MUTAGENESIS OF SER-515</scope>
</reference>
<reference key="21">
    <citation type="journal article" date="2007" name="Nucleic Acids Res.">
        <title>Dynamics of Dnmt1 interaction with the replication machinery and its role in postreplicative maintenance of DNA methylation.</title>
        <authorList>
            <person name="Schermelleh L."/>
            <person name="Haemmer A."/>
            <person name="Spada F."/>
            <person name="Roesing N."/>
            <person name="Meilinger D."/>
            <person name="Rothbauer U."/>
            <person name="Cardoso M.C."/>
            <person name="Leonhardt H."/>
        </authorList>
    </citation>
    <scope>FUNCTION</scope>
    <scope>MUTAGENESIS OF GLN-162; PHE-169 AND CYS-1229</scope>
    <scope>ACTIVE SITE</scope>
</reference>
<reference key="22">
    <citation type="journal article" date="2007" name="Proc. Natl. Acad. Sci. U.S.A.">
        <title>Large-scale phosphorylation analysis of mouse liver.</title>
        <authorList>
            <person name="Villen J."/>
            <person name="Beausoleil S.A."/>
            <person name="Gerber S.A."/>
            <person name="Gygi S.P."/>
        </authorList>
    </citation>
    <scope>PHOSPHORYLATION [LARGE SCALE ANALYSIS] AT SER-152 AND SER-717</scope>
    <scope>IDENTIFICATION BY MASS SPECTROMETRY [LARGE SCALE ANALYSIS]</scope>
    <source>
        <tissue>Liver</tissue>
    </source>
</reference>
<reference key="23">
    <citation type="journal article" date="2009" name="Immunity">
        <title>The phagosomal proteome in interferon-gamma-activated macrophages.</title>
        <authorList>
            <person name="Trost M."/>
            <person name="English L."/>
            <person name="Lemieux S."/>
            <person name="Courcelles M."/>
            <person name="Desjardins M."/>
            <person name="Thibault P."/>
        </authorList>
    </citation>
    <scope>PHOSPHORYLATION [LARGE SCALE ANALYSIS] AT SER-717</scope>
    <scope>IDENTIFICATION BY MASS SPECTROMETRY [LARGE SCALE ANALYSIS]</scope>
</reference>
<reference key="24">
    <citation type="journal article" date="2010" name="Cell">
        <title>A tissue-specific atlas of mouse protein phosphorylation and expression.</title>
        <authorList>
            <person name="Huttlin E.L."/>
            <person name="Jedrychowski M.P."/>
            <person name="Elias J.E."/>
            <person name="Goswami T."/>
            <person name="Rad R."/>
            <person name="Beausoleil S.A."/>
            <person name="Villen J."/>
            <person name="Haas W."/>
            <person name="Sowa M.E."/>
            <person name="Gygi S.P."/>
        </authorList>
    </citation>
    <scope>PHOSPHORYLATION [LARGE SCALE ANALYSIS] AT SER-15; SER-138; SER-140; SER-146; SER-150; SER-152; SER-240; SER-713 AND SER-717</scope>
    <scope>IDENTIFICATION BY MASS SPECTROMETRY [LARGE SCALE ANALYSIS]</scope>
    <source>
        <tissue>Brain</tissue>
        <tissue>Brown adipose tissue</tissue>
        <tissue>Heart</tissue>
        <tissue>Kidney</tissue>
        <tissue>Liver</tissue>
        <tissue>Lung</tissue>
        <tissue>Pancreas</tissue>
        <tissue>Spleen</tissue>
        <tissue>Testis</tissue>
    </source>
</reference>
<reference key="25">
    <citation type="journal article" date="2011" name="J. Cell. Biochem.">
        <title>Usp7 and Uhrf1 control ubiquitination and stability of the maintenance DNA methyltransferase Dnmt1.</title>
        <authorList>
            <person name="Qin W."/>
            <person name="Leonhardt H."/>
            <person name="Spada F."/>
        </authorList>
    </citation>
    <scope>UBIQUITINATION</scope>
    <scope>DEUBIQUITINATION BY USP7</scope>
    <scope>INTERACTION WITH USP7 AND UHRF1</scope>
</reference>
<reference key="26">
    <citation type="journal article" date="2010" name="Biochem. J.">
        <title>The DNA-binding activity of mouse DNA methyltransferase 1 is regulated by phosphorylation with casein kinase 1delta/epsilon.</title>
        <authorList>
            <person name="Sugiyama Y."/>
            <person name="Hatano N."/>
            <person name="Sueyoshi N."/>
            <person name="Suetake I."/>
            <person name="Tajima S."/>
            <person name="Kinoshita E."/>
            <person name="Kinoshita-Kikuta E."/>
            <person name="Koike T."/>
            <person name="Kameshita I."/>
        </authorList>
    </citation>
    <scope>PHOSPHORYLATION AT SER-146 BY CSNK1D/CK1</scope>
    <scope>INTERACTION WITH CSNK1D</scope>
</reference>
<reference key="27">
    <citation type="journal article" date="2013" name="Mol. Cell">
        <title>SIRT5-mediated lysine desuccinylation impacts diverse metabolic pathways.</title>
        <authorList>
            <person name="Park J."/>
            <person name="Chen Y."/>
            <person name="Tishkoff D.X."/>
            <person name="Peng C."/>
            <person name="Tan M."/>
            <person name="Dai L."/>
            <person name="Xie Z."/>
            <person name="Zhang Y."/>
            <person name="Zwaans B.M."/>
            <person name="Skinner M.E."/>
            <person name="Lombard D.B."/>
            <person name="Zhao Y."/>
        </authorList>
    </citation>
    <scope>ACETYLATION [LARGE SCALE ANALYSIS] AT LYS-1122 AND LYS-1124</scope>
    <scope>IDENTIFICATION BY MASS SPECTROMETRY [LARGE SCALE ANALYSIS]</scope>
    <source>
        <tissue>Embryonic fibroblast</tissue>
    </source>
</reference>
<reference key="28">
    <citation type="journal article" date="2017" name="Biochem. Biophys. Res. Commun.">
        <title>Sirt7 stabilizes rDNA heterochromatin through recruitment of DNMT1 and Sirt1.</title>
        <authorList>
            <person name="Ianni A."/>
            <person name="Hoelper S."/>
            <person name="Krueger M."/>
            <person name="Braun T."/>
            <person name="Bober E."/>
        </authorList>
    </citation>
    <scope>INTERACTION WITH SIRT7</scope>
</reference>
<reference key="29">
    <citation type="journal article" date="2011" name="Science">
        <title>Structure of DNMT1-DNA complex reveals a role for autoinhibition in maintenance DNA methylation.</title>
        <authorList>
            <person name="Song J."/>
            <person name="Rechkoblit O."/>
            <person name="Bestor T.H."/>
            <person name="Patel D.J."/>
        </authorList>
    </citation>
    <scope>X-RAY CRYSTALLOGRAPHY (2.5 ANGSTROMS) OF 731-1602 IN COMPLEX WITH S-ADENOSYL-L-HOMOCYSTEINE AND DNA</scope>
    <scope>AUTOINHIBITORY LINKER</scope>
</reference>
<evidence type="ECO:0000250" key="1"/>
<evidence type="ECO:0000250" key="2">
    <source>
        <dbReference type="UniProtKB" id="P26358"/>
    </source>
</evidence>
<evidence type="ECO:0000255" key="3"/>
<evidence type="ECO:0000255" key="4">
    <source>
        <dbReference type="PROSITE-ProRule" id="PRU00370"/>
    </source>
</evidence>
<evidence type="ECO:0000255" key="5">
    <source>
        <dbReference type="PROSITE-ProRule" id="PRU00509"/>
    </source>
</evidence>
<evidence type="ECO:0000255" key="6">
    <source>
        <dbReference type="PROSITE-ProRule" id="PRU01016"/>
    </source>
</evidence>
<evidence type="ECO:0000255" key="7">
    <source>
        <dbReference type="PROSITE-ProRule" id="PRU01260"/>
    </source>
</evidence>
<evidence type="ECO:0000255" key="8">
    <source>
        <dbReference type="PROSITE-ProRule" id="PRU10018"/>
    </source>
</evidence>
<evidence type="ECO:0000256" key="9">
    <source>
        <dbReference type="SAM" id="MobiDB-lite"/>
    </source>
</evidence>
<evidence type="ECO:0000269" key="10">
    <source>
    </source>
</evidence>
<evidence type="ECO:0000269" key="11">
    <source>
    </source>
</evidence>
<evidence type="ECO:0000269" key="12">
    <source>
    </source>
</evidence>
<evidence type="ECO:0000269" key="13">
    <source>
    </source>
</evidence>
<evidence type="ECO:0000269" key="14">
    <source>
    </source>
</evidence>
<evidence type="ECO:0000269" key="15">
    <source>
    </source>
</evidence>
<evidence type="ECO:0000269" key="16">
    <source>
    </source>
</evidence>
<evidence type="ECO:0000269" key="17">
    <source>
    </source>
</evidence>
<evidence type="ECO:0000269" key="18">
    <source>
    </source>
</evidence>
<evidence type="ECO:0000269" key="19">
    <source>
    </source>
</evidence>
<evidence type="ECO:0000269" key="20">
    <source>
    </source>
</evidence>
<evidence type="ECO:0000269" key="21">
    <source>
    </source>
</evidence>
<evidence type="ECO:0000269" key="22">
    <source>
    </source>
</evidence>
<evidence type="ECO:0000269" key="23">
    <source>
    </source>
</evidence>
<evidence type="ECO:0000303" key="24">
    <source>
    </source>
</evidence>
<evidence type="ECO:0000303" key="25">
    <source>
    </source>
</evidence>
<evidence type="ECO:0000303" key="26">
    <source>
    </source>
</evidence>
<evidence type="ECO:0000305" key="27"/>
<evidence type="ECO:0007744" key="28">
    <source>
        <dbReference type="PDB" id="3PT6"/>
    </source>
</evidence>
<evidence type="ECO:0007744" key="29">
    <source>
        <dbReference type="PDB" id="3PT9"/>
    </source>
</evidence>
<evidence type="ECO:0007744" key="30">
    <source>
        <dbReference type="PDB" id="4DA4"/>
    </source>
</evidence>
<evidence type="ECO:0007744" key="31">
    <source>
    </source>
</evidence>
<evidence type="ECO:0007744" key="32">
    <source>
    </source>
</evidence>
<evidence type="ECO:0007744" key="33">
    <source>
    </source>
</evidence>
<evidence type="ECO:0007744" key="34">
    <source>
    </source>
</evidence>
<evidence type="ECO:0007829" key="35">
    <source>
        <dbReference type="PDB" id="3AV4"/>
    </source>
</evidence>
<evidence type="ECO:0007829" key="36">
    <source>
        <dbReference type="PDB" id="3AV5"/>
    </source>
</evidence>
<evidence type="ECO:0007829" key="37">
    <source>
        <dbReference type="PDB" id="3AV6"/>
    </source>
</evidence>
<evidence type="ECO:0007829" key="38">
    <source>
        <dbReference type="PDB" id="3PT6"/>
    </source>
</evidence>
<evidence type="ECO:0007829" key="39">
    <source>
        <dbReference type="PDB" id="3PT9"/>
    </source>
</evidence>
<evidence type="ECO:0007829" key="40">
    <source>
        <dbReference type="PDB" id="4DA4"/>
    </source>
</evidence>
<evidence type="ECO:0007829" key="41">
    <source>
        <dbReference type="PDB" id="5GUT"/>
    </source>
</evidence>
<evidence type="ECO:0007829" key="42">
    <source>
        <dbReference type="PDB" id="5WY1"/>
    </source>
</evidence>
<evidence type="ECO:0007829" key="43">
    <source>
        <dbReference type="PDB" id="6W8W"/>
    </source>
</evidence>
<name>DNMT1_MOUSE</name>
<sequence>MPARTAPARVPALASPAGSLPDHVRRRLKDLERDGLTEKECVREKLNLLHEFLQTEIKSQLCDLETKLHKEELSEEGYLAKVKSLLNKDLSLENGTHTLTQKANGCPANGSRPTWRAEMADSNRSPRSRPKPRGPRRSKSDSDTLSVETSPSSVATRRTTRQTTITAHFTKGPTKRKPKEESEEGNSAESAAEERDQDKKRRVVDTESGAAAAVEKLEEVTAGTQLGPEEPCEQEDDNRSLRRHTRELSLRRKSKEDPDREARPETHLDEDEDGKKDKRSSRPRSQPRDPAAKRRPKEAEPEQVAPETPEDRDEDEREEKRRKTTRKKLESHTVPVQSRSERKAAQSKSVIPKINSPKCPECGQHLDDPNLKYQQHPEDAVDEPQMLTSEKLSIYDSTSTWFDTYEDSPMHRFTSFSVYCSRGHLCPVDTGLIEKNVELYFSGCAKAIHDENPSMEGGINGKNLGPINQWWLSGFDGGEKVLIGFSTAFAEYILMEPSKEYEPIFGLMQEKIYISKIVVEFLQNNPDAVYEDLINKIETTVPPSTINVNRFTEDSLLRHAQFVVSQVESYDEAKDDDETPIFLSPCMRALIHLAGVSLGQRRATRRVMGATKEKDKAPTKATTTKLVYQIFDTFFSEQIEKYDKEDKENAMKRRRCGVCEVCQQPECGKCKACKDMVKFGGTGRSKQACLKRRCPNLAVKEADDDEEADDDVSEMPSPKKLHQGKKKKQNKDRISWLGQPMKIEENRTYYQKVSIDEEMLEVGDCVSVIPDDSSKPLYLARVTALWEDKNGQMMFHAHWFCAGTDTVLGATSDPLELFLVGECENMQLSYIHSKVKVIYKAPSENWAMEGGTDPETTLPGAEDGKTYFFQLWYNQEYARFESPPKTQPTEDNKHKFCLSCIRLAELRQKEMPKVLEQIEEVDGRVYCSSITKNGVVYRLGDSVYLPPEAFTFNIKVASPVKRPKKDPVNETLYPEHYRKYSDYIKGSNLDAPEPYRIGRIKEIHCGKKKGKVNEADIKLRLYKFYRPENTHRSYNGSYHTDINMLYWSDEEAVVNFSDVQGRCTVEYGEDLLESIQDYSQGGPDRFYFLEAYNSKTKNFEDPPNHARSPGNKGKGKGKGKGKGKHQVSEPKEPEAAIKLPKLRTLDVFSGCGGLSEGFHQAGISETLWAIEMWDPAAQAFRLNNPGTTVFTEDCNVLLKLVMAGEVTNSLGQRLPQKGDVEMLCGGPPCQGFSGMNRFNSRTYSKFKNSLVVSFLSYCDYYRPRFFLLENVRNFVSYRRSMVLKLTLRCLVRMGYQCTFGVLQAGQYGVAQTRRRAIILAAAPGEKLPLFPEPLHVFAPRACQLSVVVDDKKFVSNITRLSSGPFRTITVRDTMSDLPEIQNGASNSEIPYNGEPLSWFQRQLRGSHYQPILRDHICKDMSPLVAARMRHIPLFPGSDWRDLPNIQVRLGDGVIAHKLQYTFHDVKNGYSSTGALRGVCSCAEGKACDPESRQFSTLIPWCLPHTGNRHNHWAGLYGRLEWDGFFSTTVTNPEPMGKQGRVLHPEQHRVVSVRECARSQGFPDSYRFFGNILDRHRQVGNAVPPPLAKAIGLEIKLCLLSSARESASAAVKAKEEAATKD</sequence>
<keyword id="KW-0002">3D-structure</keyword>
<keyword id="KW-0007">Acetylation</keyword>
<keyword id="KW-0010">Activator</keyword>
<keyword id="KW-0021">Allosteric enzyme</keyword>
<keyword id="KW-0025">Alternative splicing</keyword>
<keyword id="KW-0156">Chromatin regulator</keyword>
<keyword id="KW-0963">Cytoplasm</keyword>
<keyword id="KW-0903">Direct protein sequencing</keyword>
<keyword id="KW-0238">DNA-binding</keyword>
<keyword id="KW-1017">Isopeptide bond</keyword>
<keyword id="KW-0479">Metal-binding</keyword>
<keyword id="KW-0488">Methylation</keyword>
<keyword id="KW-0489">Methyltransferase</keyword>
<keyword id="KW-0539">Nucleus</keyword>
<keyword id="KW-0597">Phosphoprotein</keyword>
<keyword id="KW-1185">Reference proteome</keyword>
<keyword id="KW-0677">Repeat</keyword>
<keyword id="KW-0678">Repressor</keyword>
<keyword id="KW-0949">S-adenosyl-L-methionine</keyword>
<keyword id="KW-0804">Transcription</keyword>
<keyword id="KW-0805">Transcription regulation</keyword>
<keyword id="KW-0808">Transferase</keyword>
<keyword id="KW-0832">Ubl conjugation</keyword>
<keyword id="KW-0862">Zinc</keyword>
<keyword id="KW-0863">Zinc-finger</keyword>
<proteinExistence type="evidence at protein level"/>
<feature type="chain" id="PRO_0000088035" description="DNA (cytosine-5)-methyltransferase 1">
    <location>
        <begin position="1"/>
        <end position="1620"/>
    </location>
</feature>
<feature type="domain" description="DMAP1-binding" evidence="7">
    <location>
        <begin position="16"/>
        <end position="109"/>
    </location>
</feature>
<feature type="domain" description="BAH 1" evidence="4">
    <location>
        <begin position="758"/>
        <end position="884"/>
    </location>
</feature>
<feature type="domain" description="BAH 2" evidence="4">
    <location>
        <begin position="976"/>
        <end position="1103"/>
    </location>
</feature>
<feature type="repeat" description="1">
    <location>
        <begin position="1112"/>
        <end position="1113"/>
    </location>
</feature>
<feature type="repeat" description="2">
    <location>
        <begin position="1114"/>
        <end position="1115"/>
    </location>
</feature>
<feature type="repeat" description="3">
    <location>
        <begin position="1116"/>
        <end position="1117"/>
    </location>
</feature>
<feature type="repeat" description="4">
    <location>
        <begin position="1118"/>
        <end position="1119"/>
    </location>
</feature>
<feature type="repeat" description="5">
    <location>
        <begin position="1120"/>
        <end position="1121"/>
    </location>
</feature>
<feature type="repeat" description="6">
    <location>
        <begin position="1122"/>
        <end position="1123"/>
    </location>
</feature>
<feature type="repeat" description="7; approximate">
    <location>
        <begin position="1124"/>
        <end position="1125"/>
    </location>
</feature>
<feature type="domain" description="SAM-dependent MTase C5-type" evidence="6">
    <location>
        <begin position="1142"/>
        <end position="1601"/>
    </location>
</feature>
<feature type="zinc finger region" description="CXXC-type" evidence="5">
    <location>
        <begin position="649"/>
        <end position="695"/>
    </location>
</feature>
<feature type="region of interest" description="Interaction with the PRC2/EED-EZH2 complex">
    <location>
        <begin position="1"/>
        <end position="343"/>
    </location>
</feature>
<feature type="region of interest" description="Interaction with DNMT3A" evidence="1">
    <location>
        <begin position="1"/>
        <end position="145"/>
    </location>
</feature>
<feature type="region of interest" description="Interaction with DMAP1" evidence="11">
    <location>
        <begin position="1"/>
        <end position="120"/>
    </location>
</feature>
<feature type="region of interest" description="Disordered" evidence="9">
    <location>
        <begin position="1"/>
        <end position="21"/>
    </location>
</feature>
<feature type="region of interest" description="Disordered" evidence="9">
    <location>
        <begin position="96"/>
        <end position="369"/>
    </location>
</feature>
<feature type="region of interest" description="Interaction with DNMT3B" evidence="1">
    <location>
        <begin position="147"/>
        <end position="217"/>
    </location>
</feature>
<feature type="region of interest" description="Interaction with PCNA">
    <location>
        <begin position="161"/>
        <end position="172"/>
    </location>
</feature>
<feature type="region of interest" description="Interaction with the PRC2/EED-EZH2 complex">
    <location>
        <begin position="305"/>
        <end position="609"/>
    </location>
</feature>
<feature type="region of interest" description="DNA replication foci-targeting sequence" evidence="1">
    <location>
        <begin position="328"/>
        <end position="556"/>
    </location>
</feature>
<feature type="region of interest" description="Interaction with HDAC1" evidence="10">
    <location>
        <begin position="696"/>
        <end position="813"/>
    </location>
</feature>
<feature type="region of interest" description="Autoinhibitory linker">
    <location>
        <begin position="696"/>
        <end position="757"/>
    </location>
</feature>
<feature type="region of interest" description="Disordered" evidence="9">
    <location>
        <begin position="702"/>
        <end position="732"/>
    </location>
</feature>
<feature type="region of interest" description="Disordered" evidence="9">
    <location>
        <begin position="1097"/>
        <end position="1136"/>
    </location>
</feature>
<feature type="region of interest" description="7 X 2 AA tandem repeats of K-G">
    <location>
        <begin position="1112"/>
        <end position="1125"/>
    </location>
</feature>
<feature type="region of interest" description="Interaction with the PRC2/EED-EZH2 complex">
    <location>
        <begin position="1124"/>
        <end position="1620"/>
    </location>
</feature>
<feature type="region of interest" description="Catalytic">
    <location>
        <begin position="1142"/>
        <end position="1620"/>
    </location>
</feature>
<feature type="short sequence motif" description="Nuclear localization signal" evidence="3">
    <location>
        <begin position="175"/>
        <end position="202"/>
    </location>
</feature>
<feature type="compositionally biased region" description="Basic residues" evidence="9">
    <location>
        <begin position="126"/>
        <end position="137"/>
    </location>
</feature>
<feature type="compositionally biased region" description="Polar residues" evidence="9">
    <location>
        <begin position="144"/>
        <end position="155"/>
    </location>
</feature>
<feature type="compositionally biased region" description="Basic and acidic residues" evidence="9">
    <location>
        <begin position="192"/>
        <end position="205"/>
    </location>
</feature>
<feature type="compositionally biased region" description="Basic and acidic residues" evidence="9">
    <location>
        <begin position="246"/>
        <end position="267"/>
    </location>
</feature>
<feature type="compositionally biased region" description="Basic and acidic residues" evidence="9">
    <location>
        <begin position="286"/>
        <end position="300"/>
    </location>
</feature>
<feature type="compositionally biased region" description="Acidic residues" evidence="9">
    <location>
        <begin position="308"/>
        <end position="317"/>
    </location>
</feature>
<feature type="compositionally biased region" description="Acidic residues" evidence="9">
    <location>
        <begin position="702"/>
        <end position="713"/>
    </location>
</feature>
<feature type="compositionally biased region" description="Basic residues" evidence="9">
    <location>
        <begin position="719"/>
        <end position="730"/>
    </location>
</feature>
<feature type="compositionally biased region" description="Basic residues" evidence="9">
    <location>
        <begin position="1113"/>
        <end position="1125"/>
    </location>
</feature>
<feature type="compositionally biased region" description="Basic and acidic residues" evidence="9">
    <location>
        <begin position="1126"/>
        <end position="1135"/>
    </location>
</feature>
<feature type="active site" evidence="17">
    <location>
        <position position="1229"/>
    </location>
</feature>
<feature type="binding site" evidence="1">
    <location>
        <position position="359"/>
    </location>
    <ligand>
        <name>Zn(2+)</name>
        <dbReference type="ChEBI" id="CHEBI:29105"/>
    </ligand>
</feature>
<feature type="binding site" evidence="1">
    <location>
        <position position="362"/>
    </location>
    <ligand>
        <name>Zn(2+)</name>
        <dbReference type="ChEBI" id="CHEBI:29105"/>
    </ligand>
</feature>
<feature type="binding site" evidence="1">
    <location>
        <position position="420"/>
    </location>
    <ligand>
        <name>Zn(2+)</name>
        <dbReference type="ChEBI" id="CHEBI:29105"/>
    </ligand>
</feature>
<feature type="binding site" evidence="1">
    <location>
        <position position="424"/>
    </location>
    <ligand>
        <name>Zn(2+)</name>
        <dbReference type="ChEBI" id="CHEBI:29105"/>
    </ligand>
</feature>
<feature type="binding site" evidence="5">
    <location>
        <position position="656"/>
    </location>
    <ligand>
        <name>Zn(2+)</name>
        <dbReference type="ChEBI" id="CHEBI:29105"/>
        <label>1</label>
    </ligand>
</feature>
<feature type="binding site" evidence="5">
    <location>
        <position position="659"/>
    </location>
    <ligand>
        <name>Zn(2+)</name>
        <dbReference type="ChEBI" id="CHEBI:29105"/>
        <label>1</label>
    </ligand>
</feature>
<feature type="binding site" evidence="5">
    <location>
        <position position="662"/>
    </location>
    <ligand>
        <name>Zn(2+)</name>
        <dbReference type="ChEBI" id="CHEBI:29105"/>
        <label>1</label>
    </ligand>
</feature>
<feature type="binding site" evidence="5">
    <location>
        <position position="667"/>
    </location>
    <ligand>
        <name>Zn(2+)</name>
        <dbReference type="ChEBI" id="CHEBI:29105"/>
        <label>2</label>
    </ligand>
</feature>
<feature type="binding site" evidence="5">
    <location>
        <position position="670"/>
    </location>
    <ligand>
        <name>Zn(2+)</name>
        <dbReference type="ChEBI" id="CHEBI:29105"/>
        <label>2</label>
    </ligand>
</feature>
<feature type="binding site" evidence="5">
    <location>
        <position position="673"/>
    </location>
    <ligand>
        <name>Zn(2+)</name>
        <dbReference type="ChEBI" id="CHEBI:29105"/>
        <label>2</label>
    </ligand>
</feature>
<feature type="binding site" evidence="5">
    <location>
        <position position="689"/>
    </location>
    <ligand>
        <name>Zn(2+)</name>
        <dbReference type="ChEBI" id="CHEBI:29105"/>
        <label>2</label>
    </ligand>
</feature>
<feature type="binding site" evidence="5">
    <location>
        <position position="694"/>
    </location>
    <ligand>
        <name>Zn(2+)</name>
        <dbReference type="ChEBI" id="CHEBI:29105"/>
        <label>1</label>
    </ligand>
</feature>
<feature type="binding site" evidence="20 28 30">
    <location>
        <position position="1149"/>
    </location>
    <ligand>
        <name>S-adenosyl-L-methionine</name>
        <dbReference type="ChEBI" id="CHEBI:59789"/>
    </ligand>
</feature>
<feature type="binding site" evidence="20 28 29 30">
    <location>
        <begin position="1153"/>
        <end position="1154"/>
    </location>
    <ligand>
        <name>S-adenosyl-L-methionine</name>
        <dbReference type="ChEBI" id="CHEBI:59789"/>
    </ligand>
</feature>
<feature type="binding site" evidence="20 28 29 30">
    <location>
        <begin position="1171"/>
        <end position="1172"/>
    </location>
    <ligand>
        <name>S-adenosyl-L-methionine</name>
        <dbReference type="ChEBI" id="CHEBI:59789"/>
    </ligand>
</feature>
<feature type="binding site" evidence="20 28 29">
    <location>
        <begin position="1193"/>
        <end position="1194"/>
    </location>
    <ligand>
        <name>S-adenosyl-L-methionine</name>
        <dbReference type="ChEBI" id="CHEBI:59789"/>
    </ligand>
</feature>
<feature type="binding site" evidence="20 28 29 30">
    <location>
        <position position="1582"/>
    </location>
    <ligand>
        <name>S-adenosyl-L-methionine</name>
        <dbReference type="ChEBI" id="CHEBI:59789"/>
    </ligand>
</feature>
<feature type="modified residue" description="Phosphoserine" evidence="33">
    <location>
        <position position="15"/>
    </location>
</feature>
<feature type="modified residue" description="N6,N6-dimethyllysine; by EHMT2" evidence="2">
    <location>
        <position position="70"/>
    </location>
</feature>
<feature type="modified residue" description="Phosphoserine" evidence="33">
    <location>
        <position position="138"/>
    </location>
</feature>
<feature type="modified residue" description="N6-methyllysine; by SETD7" evidence="2">
    <location>
        <position position="139"/>
    </location>
</feature>
<feature type="modified residue" description="Phosphoserine" evidence="33">
    <location>
        <position position="140"/>
    </location>
</feature>
<feature type="modified residue" description="Phosphoserine; by CK1" evidence="19 33">
    <location>
        <position position="146"/>
    </location>
</feature>
<feature type="modified residue" description="Phosphoserine" evidence="33">
    <location>
        <position position="150"/>
    </location>
</feature>
<feature type="modified residue" description="Phosphoserine" evidence="31 33">
    <location>
        <position position="152"/>
    </location>
</feature>
<feature type="modified residue" description="Phosphothreonine" evidence="2">
    <location>
        <position position="164"/>
    </location>
</feature>
<feature type="modified residue" description="N6-acetyllysine" evidence="2">
    <location>
        <position position="171"/>
    </location>
</feature>
<feature type="modified residue" description="Phosphoserine" evidence="33">
    <location>
        <position position="240"/>
    </location>
</feature>
<feature type="modified residue" description="N6-acetyllysine; alternate" evidence="2">
    <location>
        <position position="255"/>
    </location>
</feature>
<feature type="modified residue" description="N6-acetyllysine" evidence="2">
    <location>
        <position position="372"/>
    </location>
</feature>
<feature type="modified residue" description="Phosphoserine" evidence="18 23">
    <location>
        <position position="515"/>
    </location>
</feature>
<feature type="modified residue" description="Phosphoserine" evidence="2">
    <location>
        <position position="555"/>
    </location>
</feature>
<feature type="modified residue" description="Phosphoserine" evidence="33">
    <location>
        <position position="713"/>
    </location>
</feature>
<feature type="modified residue" description="Phosphoserine" evidence="31 32 33">
    <location>
        <position position="717"/>
    </location>
</feature>
<feature type="modified residue" description="Phosphoserine" evidence="2">
    <location>
        <position position="735"/>
    </location>
</feature>
<feature type="modified residue" description="N6-acetyllysine" evidence="2">
    <location>
        <position position="752"/>
    </location>
</feature>
<feature type="modified residue" description="Phosphoserine" evidence="2">
    <location>
        <position position="882"/>
    </location>
</feature>
<feature type="modified residue" description="N6-acetyllysine" evidence="2">
    <location>
        <position position="895"/>
    </location>
</feature>
<feature type="modified residue" description="N6-acetyllysine" evidence="2">
    <location>
        <position position="961"/>
    </location>
</feature>
<feature type="modified residue" description="N6-acetyllysine" evidence="2">
    <location>
        <position position="965"/>
    </location>
</feature>
<feature type="modified residue" description="N6-acetyllysine" evidence="2">
    <location>
        <position position="979"/>
    </location>
</feature>
<feature type="modified residue" description="N6-acetyllysine" evidence="2">
    <location>
        <position position="1114"/>
    </location>
</feature>
<feature type="modified residue" description="N6-acetyllysine" evidence="2">
    <location>
        <position position="1116"/>
    </location>
</feature>
<feature type="modified residue" description="N6-acetyllysine" evidence="2">
    <location>
        <position position="1118"/>
    </location>
</feature>
<feature type="modified residue" description="N6-acetyllysine" evidence="2">
    <location>
        <position position="1120"/>
    </location>
</feature>
<feature type="modified residue" description="N6-acetyllysine" evidence="34">
    <location>
        <position position="1122"/>
    </location>
</feature>
<feature type="modified residue" description="N6-acetyllysine" evidence="34">
    <location>
        <position position="1124"/>
    </location>
</feature>
<feature type="modified residue" description="N6-acetyllysine" evidence="2">
    <location>
        <position position="1352"/>
    </location>
</feature>
<feature type="modified residue" description="N6-acetyllysine" evidence="2">
    <location>
        <position position="1418"/>
    </location>
</feature>
<feature type="cross-link" description="Glycyl lysine isopeptide (Lys-Gly) (interchain with G-Cter in SUMO2); alternate" evidence="2">
    <location>
        <position position="255"/>
    </location>
</feature>
<feature type="cross-link" description="Glycyl lysine isopeptide (Lys-Gly) (interchain with G-Cter in SUMO2)" evidence="2">
    <location>
        <position position="1611"/>
    </location>
</feature>
<feature type="splice variant" id="VSP_005619" description="In isoform 2." evidence="24 25 26">
    <location>
        <begin position="1"/>
        <end position="118"/>
    </location>
</feature>
<feature type="mutagenesis site" description="Abolishes interaction with PCNA. No effect on activity." evidence="17">
    <original>Q</original>
    <variation>E</variation>
    <location>
        <position position="162"/>
    </location>
</feature>
<feature type="mutagenesis site" description="Abolishes interaction with PCNA. No effect on activity." evidence="17">
    <original>F</original>
    <variation>S</variation>
    <location>
        <position position="169"/>
    </location>
</feature>
<feature type="mutagenesis site" description="Loss of activity. No effect on DNA-binding capacity." evidence="18">
    <original>S</original>
    <variation>A</variation>
    <location>
        <position position="515"/>
    </location>
</feature>
<feature type="mutagenesis site" description="Slightly reduces activity." evidence="18">
    <original>S</original>
    <variation>E</variation>
    <location>
        <position position="515"/>
    </location>
</feature>
<feature type="mutagenesis site" description="Loss of activity." evidence="17">
    <original>C</original>
    <variation>W</variation>
    <location>
        <position position="1229"/>
    </location>
</feature>
<feature type="sequence conflict" description="In Ref. 1; CAA32910 and 6; AAC40061." evidence="27" ref="1 6">
    <original>SV</original>
    <variation>F</variation>
    <location>
        <begin position="146"/>
        <end position="147"/>
    </location>
</feature>
<feature type="sequence conflict" description="In Ref. 1; CAA32910 and 6; AAC40061." evidence="27" ref="1 6">
    <original>AEPEQVAPETP</original>
    <variation>VRARAGSSRDS</variation>
    <location>
        <begin position="299"/>
        <end position="309"/>
    </location>
</feature>
<feature type="sequence conflict" description="In Ref. 1; CAA32910 and 6; AAC40061." evidence="27" ref="1 6">
    <original>V</original>
    <variation>C</variation>
    <location>
        <position position="936"/>
    </location>
</feature>
<feature type="sequence conflict" description="In Ref. 1; CAA32910 and 6; AAC40061." evidence="27" ref="1 6">
    <original>P</original>
    <variation>R</variation>
    <location>
        <position position="947"/>
    </location>
</feature>
<feature type="sequence conflict" description="In Ref. 1; CAA32910 and 6; AAC40061." evidence="27" ref="1 6">
    <original>NETLYPEH</original>
    <variation>KENPVPRDT</variation>
    <location>
        <begin position="969"/>
        <end position="976"/>
    </location>
</feature>
<feature type="sequence conflict" description="In Ref. 1; CAA32910 and 6; AAC40061." evidence="27" ref="1 6">
    <original>S</original>
    <variation>R</variation>
    <location>
        <position position="987"/>
    </location>
</feature>
<feature type="sequence conflict" description="In Ref. 1; CAA32910 and 6; AAC40061." evidence="27" ref="1 6">
    <original>Y</original>
    <variation>C</variation>
    <location>
        <position position="1046"/>
    </location>
</feature>
<feature type="sequence conflict" description="In Ref. 1; CAA32910 and 6; AAC40061." evidence="27" ref="1 6">
    <original>G</original>
    <variation>R</variation>
    <location>
        <position position="1068"/>
    </location>
</feature>
<feature type="sequence conflict" description="In Ref. 1; CAA32910 and 6; AAC40061." evidence="27" ref="1 6">
    <original>R</original>
    <variation>P</variation>
    <location>
        <position position="1429"/>
    </location>
</feature>
<feature type="sequence conflict" description="In Ref. 1; CAA32910 and 6; AAC40061." evidence="27" ref="1 6">
    <original>H</original>
    <variation>D</variation>
    <location>
        <position position="1456"/>
    </location>
</feature>
<feature type="turn" evidence="35">
    <location>
        <begin position="360"/>
        <end position="362"/>
    </location>
</feature>
<feature type="strand" evidence="42">
    <location>
        <begin position="365"/>
        <end position="367"/>
    </location>
</feature>
<feature type="helix" evidence="35">
    <location>
        <begin position="383"/>
        <end position="387"/>
    </location>
</feature>
<feature type="strand" evidence="36">
    <location>
        <begin position="406"/>
        <end position="408"/>
    </location>
</feature>
<feature type="strand" evidence="35">
    <location>
        <begin position="410"/>
        <end position="419"/>
    </location>
</feature>
<feature type="strand" evidence="37">
    <location>
        <begin position="423"/>
        <end position="425"/>
    </location>
</feature>
<feature type="turn" evidence="35">
    <location>
        <begin position="432"/>
        <end position="436"/>
    </location>
</feature>
<feature type="strand" evidence="35">
    <location>
        <begin position="440"/>
        <end position="445"/>
    </location>
</feature>
<feature type="strand" evidence="37">
    <location>
        <begin position="454"/>
        <end position="458"/>
    </location>
</feature>
<feature type="strand" evidence="35">
    <location>
        <begin position="459"/>
        <end position="465"/>
    </location>
</feature>
<feature type="strand" evidence="35">
    <location>
        <begin position="469"/>
        <end position="473"/>
    </location>
</feature>
<feature type="strand" evidence="35">
    <location>
        <begin position="475"/>
        <end position="479"/>
    </location>
</feature>
<feature type="strand" evidence="35">
    <location>
        <begin position="482"/>
        <end position="486"/>
    </location>
</feature>
<feature type="strand" evidence="35">
    <location>
        <begin position="491"/>
        <end position="494"/>
    </location>
</feature>
<feature type="turn" evidence="35">
    <location>
        <begin position="499"/>
        <end position="501"/>
    </location>
</feature>
<feature type="helix" evidence="35">
    <location>
        <begin position="502"/>
        <end position="524"/>
    </location>
</feature>
<feature type="helix" evidence="35">
    <location>
        <begin position="530"/>
        <end position="539"/>
    </location>
</feature>
<feature type="helix" evidence="35">
    <location>
        <begin position="553"/>
        <end position="558"/>
    </location>
</feature>
<feature type="helix" evidence="35">
    <location>
        <begin position="560"/>
        <end position="573"/>
    </location>
</feature>
<feature type="helix" evidence="35">
    <location>
        <begin position="581"/>
        <end position="583"/>
    </location>
</feature>
<feature type="helix" evidence="35">
    <location>
        <begin position="585"/>
        <end position="593"/>
    </location>
</feature>
<feature type="helix" evidence="35">
    <location>
        <begin position="625"/>
        <end position="635"/>
    </location>
</feature>
<feature type="strand" evidence="35">
    <location>
        <begin position="657"/>
        <end position="659"/>
    </location>
</feature>
<feature type="turn" evidence="35">
    <location>
        <begin position="660"/>
        <end position="663"/>
    </location>
</feature>
<feature type="turn" evidence="38">
    <location>
        <begin position="671"/>
        <end position="675"/>
    </location>
</feature>
<feature type="turn" evidence="38">
    <location>
        <begin position="677"/>
        <end position="680"/>
    </location>
</feature>
<feature type="helix" evidence="38">
    <location>
        <begin position="690"/>
        <end position="692"/>
    </location>
</feature>
<feature type="helix" evidence="35">
    <location>
        <begin position="695"/>
        <end position="704"/>
    </location>
</feature>
<feature type="strand" evidence="39">
    <location>
        <begin position="734"/>
        <end position="739"/>
    </location>
</feature>
<feature type="strand" evidence="39">
    <location>
        <begin position="741"/>
        <end position="743"/>
    </location>
</feature>
<feature type="strand" evidence="41">
    <location>
        <begin position="745"/>
        <end position="751"/>
    </location>
</feature>
<feature type="strand" evidence="41">
    <location>
        <begin position="753"/>
        <end position="755"/>
    </location>
</feature>
<feature type="strand" evidence="41">
    <location>
        <begin position="758"/>
        <end position="760"/>
    </location>
</feature>
<feature type="strand" evidence="41">
    <location>
        <begin position="765"/>
        <end position="768"/>
    </location>
</feature>
<feature type="strand" evidence="40">
    <location>
        <begin position="774"/>
        <end position="776"/>
    </location>
</feature>
<feature type="strand" evidence="41">
    <location>
        <begin position="778"/>
        <end position="788"/>
    </location>
</feature>
<feature type="strand" evidence="41">
    <location>
        <begin position="793"/>
        <end position="802"/>
    </location>
</feature>
<feature type="helix" evidence="41">
    <location>
        <begin position="803"/>
        <end position="805"/>
    </location>
</feature>
<feature type="strand" evidence="43">
    <location>
        <begin position="806"/>
        <end position="808"/>
    </location>
</feature>
<feature type="helix" evidence="41">
    <location>
        <begin position="809"/>
        <end position="811"/>
    </location>
</feature>
<feature type="strand" evidence="41">
    <location>
        <begin position="816"/>
        <end position="827"/>
    </location>
</feature>
<feature type="helix" evidence="41">
    <location>
        <begin position="828"/>
        <end position="830"/>
    </location>
</feature>
<feature type="strand" evidence="41">
    <location>
        <begin position="831"/>
        <end position="835"/>
    </location>
</feature>
<feature type="strand" evidence="39">
    <location>
        <begin position="837"/>
        <end position="839"/>
    </location>
</feature>
<feature type="helix" evidence="41">
    <location>
        <begin position="846"/>
        <end position="848"/>
    </location>
</feature>
<feature type="strand" evidence="41">
    <location>
        <begin position="868"/>
        <end position="874"/>
    </location>
</feature>
<feature type="turn" evidence="41">
    <location>
        <begin position="875"/>
        <end position="878"/>
    </location>
</feature>
<feature type="strand" evidence="41">
    <location>
        <begin position="879"/>
        <end position="881"/>
    </location>
</feature>
<feature type="turn" evidence="39">
    <location>
        <begin position="890"/>
        <end position="895"/>
    </location>
</feature>
<feature type="helix" evidence="41">
    <location>
        <begin position="898"/>
        <end position="910"/>
    </location>
</feature>
<feature type="strand" evidence="41">
    <location>
        <begin position="913"/>
        <end position="920"/>
    </location>
</feature>
<feature type="strand" evidence="36">
    <location>
        <begin position="922"/>
        <end position="924"/>
    </location>
</feature>
<feature type="strand" evidence="41">
    <location>
        <begin position="925"/>
        <end position="932"/>
    </location>
</feature>
<feature type="strand" evidence="41">
    <location>
        <begin position="935"/>
        <end position="938"/>
    </location>
</feature>
<feature type="strand" evidence="41">
    <location>
        <begin position="942"/>
        <end position="945"/>
    </location>
</feature>
<feature type="helix" evidence="41">
    <location>
        <begin position="947"/>
        <end position="949"/>
    </location>
</feature>
<feature type="turn" evidence="41">
    <location>
        <begin position="970"/>
        <end position="972"/>
    </location>
</feature>
<feature type="helix" evidence="41">
    <location>
        <begin position="976"/>
        <end position="979"/>
    </location>
</feature>
<feature type="strand" evidence="41">
    <location>
        <begin position="996"/>
        <end position="1008"/>
    </location>
</feature>
<feature type="strand" evidence="41">
    <location>
        <begin position="1011"/>
        <end position="1023"/>
    </location>
</feature>
<feature type="helix" evidence="41">
    <location>
        <begin position="1027"/>
        <end position="1029"/>
    </location>
</feature>
<feature type="turn" evidence="41">
    <location>
        <begin position="1031"/>
        <end position="1036"/>
    </location>
</feature>
<feature type="turn" evidence="38">
    <location>
        <begin position="1037"/>
        <end position="1039"/>
    </location>
</feature>
<feature type="strand" evidence="41">
    <location>
        <begin position="1044"/>
        <end position="1047"/>
    </location>
</feature>
<feature type="strand" evidence="41">
    <location>
        <begin position="1051"/>
        <end position="1055"/>
    </location>
</feature>
<feature type="helix" evidence="41">
    <location>
        <begin position="1056"/>
        <end position="1058"/>
    </location>
</feature>
<feature type="strand" evidence="41">
    <location>
        <begin position="1061"/>
        <end position="1067"/>
    </location>
</feature>
<feature type="helix" evidence="41">
    <location>
        <begin position="1068"/>
        <end position="1070"/>
    </location>
</feature>
<feature type="helix" evidence="41">
    <location>
        <begin position="1075"/>
        <end position="1081"/>
    </location>
</feature>
<feature type="strand" evidence="41">
    <location>
        <begin position="1085"/>
        <end position="1091"/>
    </location>
</feature>
<feature type="turn" evidence="41">
    <location>
        <begin position="1094"/>
        <end position="1096"/>
    </location>
</feature>
<feature type="strand" evidence="40">
    <location>
        <begin position="1098"/>
        <end position="1100"/>
    </location>
</feature>
<feature type="helix" evidence="41">
    <location>
        <begin position="1104"/>
        <end position="1106"/>
    </location>
</feature>
<feature type="strand" evidence="41">
    <location>
        <begin position="1142"/>
        <end position="1147"/>
    </location>
</feature>
<feature type="helix" evidence="41">
    <location>
        <begin position="1153"/>
        <end position="1161"/>
    </location>
</feature>
<feature type="strand" evidence="41">
    <location>
        <begin position="1163"/>
        <end position="1170"/>
    </location>
</feature>
<feature type="helix" evidence="41">
    <location>
        <begin position="1174"/>
        <end position="1183"/>
    </location>
</feature>
<feature type="strand" evidence="41">
    <location>
        <begin position="1187"/>
        <end position="1190"/>
    </location>
</feature>
<feature type="helix" evidence="41">
    <location>
        <begin position="1194"/>
        <end position="1202"/>
    </location>
</feature>
<feature type="turn" evidence="41">
    <location>
        <begin position="1217"/>
        <end position="1219"/>
    </location>
</feature>
<feature type="strand" evidence="41">
    <location>
        <begin position="1221"/>
        <end position="1225"/>
    </location>
</feature>
<feature type="turn" evidence="40">
    <location>
        <begin position="1230"/>
        <end position="1232"/>
    </location>
</feature>
<feature type="strand" evidence="35">
    <location>
        <begin position="1234"/>
        <end position="1236"/>
    </location>
</feature>
<feature type="helix" evidence="41">
    <location>
        <begin position="1240"/>
        <end position="1247"/>
    </location>
</feature>
<feature type="helix" evidence="41">
    <location>
        <begin position="1250"/>
        <end position="1261"/>
    </location>
</feature>
<feature type="strand" evidence="41">
    <location>
        <begin position="1264"/>
        <end position="1271"/>
    </location>
</feature>
<feature type="helix" evidence="41">
    <location>
        <begin position="1272"/>
        <end position="1275"/>
    </location>
</feature>
<feature type="helix" evidence="41">
    <location>
        <begin position="1277"/>
        <end position="1293"/>
    </location>
</feature>
<feature type="strand" evidence="41">
    <location>
        <begin position="1296"/>
        <end position="1303"/>
    </location>
</feature>
<feature type="helix" evidence="41">
    <location>
        <begin position="1304"/>
        <end position="1307"/>
    </location>
</feature>
<feature type="strand" evidence="41">
    <location>
        <begin position="1314"/>
        <end position="1321"/>
    </location>
</feature>
<feature type="helix" evidence="41">
    <location>
        <begin position="1339"/>
        <end position="1341"/>
    </location>
</feature>
<feature type="strand" evidence="41">
    <location>
        <begin position="1346"/>
        <end position="1348"/>
    </location>
</feature>
<feature type="strand" evidence="41">
    <location>
        <begin position="1351"/>
        <end position="1353"/>
    </location>
</feature>
<feature type="helix" evidence="41">
    <location>
        <begin position="1370"/>
        <end position="1374"/>
    </location>
</feature>
<feature type="strand" evidence="38">
    <location>
        <begin position="1375"/>
        <end position="1377"/>
    </location>
</feature>
<feature type="strand" evidence="41">
    <location>
        <begin position="1387"/>
        <end position="1390"/>
    </location>
</feature>
<feature type="helix" evidence="41">
    <location>
        <begin position="1398"/>
        <end position="1404"/>
    </location>
</feature>
<feature type="strand" evidence="41">
    <location>
        <begin position="1411"/>
        <end position="1413"/>
    </location>
</feature>
<feature type="helix" evidence="41">
    <location>
        <begin position="1422"/>
        <end position="1429"/>
    </location>
</feature>
<feature type="strand" evidence="36">
    <location>
        <begin position="1433"/>
        <end position="1436"/>
    </location>
</feature>
<feature type="helix" evidence="41">
    <location>
        <begin position="1439"/>
        <end position="1441"/>
    </location>
</feature>
<feature type="helix" evidence="41">
    <location>
        <begin position="1450"/>
        <end position="1452"/>
    </location>
</feature>
<feature type="strand" evidence="41">
    <location>
        <begin position="1454"/>
        <end position="1456"/>
    </location>
</feature>
<feature type="turn" evidence="41">
    <location>
        <begin position="1465"/>
        <end position="1467"/>
    </location>
</feature>
<feature type="strand" evidence="41">
    <location>
        <begin position="1477"/>
        <end position="1479"/>
    </location>
</feature>
<feature type="helix" evidence="41">
    <location>
        <begin position="1480"/>
        <end position="1483"/>
    </location>
</feature>
<feature type="strand" evidence="35">
    <location>
        <begin position="1489"/>
        <end position="1491"/>
    </location>
</feature>
<feature type="strand" evidence="41">
    <location>
        <begin position="1495"/>
        <end position="1498"/>
    </location>
</feature>
<feature type="helix" evidence="41">
    <location>
        <begin position="1501"/>
        <end position="1505"/>
    </location>
</feature>
<feature type="helix" evidence="41">
    <location>
        <begin position="1506"/>
        <end position="1512"/>
    </location>
</feature>
<feature type="turn" evidence="41">
    <location>
        <begin position="1513"/>
        <end position="1516"/>
    </location>
</feature>
<feature type="strand" evidence="35">
    <location>
        <begin position="1525"/>
        <end position="1527"/>
    </location>
</feature>
<feature type="strand" evidence="41">
    <location>
        <begin position="1536"/>
        <end position="1538"/>
    </location>
</feature>
<feature type="strand" evidence="41">
    <location>
        <begin position="1544"/>
        <end position="1549"/>
    </location>
</feature>
<feature type="helix" evidence="41">
    <location>
        <begin position="1552"/>
        <end position="1558"/>
    </location>
</feature>
<feature type="helix" evidence="41">
    <location>
        <begin position="1571"/>
        <end position="1580"/>
    </location>
</feature>
<feature type="helix" evidence="41">
    <location>
        <begin position="1584"/>
        <end position="1596"/>
    </location>
</feature>
<feature type="turn" evidence="42">
    <location>
        <begin position="1607"/>
        <end position="1611"/>
    </location>
</feature>